<organism>
    <name type="scientific">Escherichia coli (strain K12)</name>
    <dbReference type="NCBI Taxonomy" id="83333"/>
    <lineage>
        <taxon>Bacteria</taxon>
        <taxon>Pseudomonadati</taxon>
        <taxon>Pseudomonadota</taxon>
        <taxon>Gammaproteobacteria</taxon>
        <taxon>Enterobacterales</taxon>
        <taxon>Enterobacteriaceae</taxon>
        <taxon>Escherichia</taxon>
    </lineage>
</organism>
<keyword id="KW-0002">3D-structure</keyword>
<keyword id="KW-0903">Direct protein sequencing</keyword>
<keyword id="KW-0488">Methylation</keyword>
<keyword id="KW-1185">Reference proteome</keyword>
<keyword id="KW-0687">Ribonucleoprotein</keyword>
<keyword id="KW-0689">Ribosomal protein</keyword>
<keyword id="KW-0694">RNA-binding</keyword>
<keyword id="KW-0820">tRNA-binding</keyword>
<protein>
    <recommendedName>
        <fullName evidence="11">Large ribosomal subunit protein bL33</fullName>
    </recommendedName>
    <alternativeName>
        <fullName>50S ribosomal protein L33</fullName>
    </alternativeName>
</protein>
<evidence type="ECO:0000269" key="1">
    <source>
    </source>
</evidence>
<evidence type="ECO:0000269" key="2">
    <source>
    </source>
</evidence>
<evidence type="ECO:0000269" key="3">
    <source>
    </source>
</evidence>
<evidence type="ECO:0000269" key="4">
    <source>
    </source>
</evidence>
<evidence type="ECO:0000269" key="5">
    <source>
    </source>
</evidence>
<evidence type="ECO:0000269" key="6">
    <source>
    </source>
</evidence>
<evidence type="ECO:0000269" key="7">
    <source>
    </source>
</evidence>
<evidence type="ECO:0000269" key="8">
    <source>
    </source>
</evidence>
<evidence type="ECO:0000269" key="9">
    <source>
    </source>
</evidence>
<evidence type="ECO:0000269" key="10">
    <source>
    </source>
</evidence>
<evidence type="ECO:0000303" key="11">
    <source>
    </source>
</evidence>
<evidence type="ECO:0000305" key="12"/>
<evidence type="ECO:0007829" key="13">
    <source>
        <dbReference type="PDB" id="6YS3"/>
    </source>
</evidence>
<evidence type="ECO:0007829" key="14">
    <source>
        <dbReference type="PDB" id="8CGK"/>
    </source>
</evidence>
<comment type="subunit">
    <text evidence="1 2 3 4 5 6 7 8 9 10">Part of the 50S ribosomal subunit (PubMed:10094780, PubMed:12809609, PubMed:16272117, PubMed:24844575, PubMed:25310980, PubMed:27906160, PubMed:27906161, PubMed:27934701, PubMed:786732). Cross-links to the P and E site tRNAs (PubMed:8524654).</text>
</comment>
<comment type="mass spectrometry" mass="6254.1" method="MALDI" evidence="1"/>
<comment type="miscellaneous">
    <text>Surface exposed on the 50S subunit.</text>
</comment>
<comment type="similarity">
    <text evidence="12">Belongs to the bacterial ribosomal protein bL33 family.</text>
</comment>
<name>RL33_ECOLI</name>
<sequence length="55" mass="6372">MAKGIREKIKLVSSAGTGHFYTTTKNKRTKPEKLELKKFDPVVRQHVIYKEAKIK</sequence>
<accession>P0A7N9</accession>
<accession>P02436</accession>
<accession>Q2M7V0</accession>
<feature type="initiator methionine" description="Removed" evidence="9">
    <location>
        <position position="1"/>
    </location>
</feature>
<feature type="chain" id="PRO_0000170158" description="Large ribosomal subunit protein bL33">
    <location>
        <begin position="2"/>
        <end position="55"/>
    </location>
</feature>
<feature type="modified residue" description="N-methylalanine" evidence="9">
    <location>
        <position position="2"/>
    </location>
</feature>
<feature type="sequence conflict" description="In Ref. 5; AA sequence." evidence="12" ref="5">
    <original>IY</original>
    <variation>YI</variation>
    <location>
        <begin position="48"/>
        <end position="49"/>
    </location>
</feature>
<feature type="strand" evidence="14">
    <location>
        <begin position="7"/>
        <end position="13"/>
    </location>
</feature>
<feature type="strand" evidence="13">
    <location>
        <begin position="14"/>
        <end position="17"/>
    </location>
</feature>
<feature type="strand" evidence="14">
    <location>
        <begin position="20"/>
        <end position="25"/>
    </location>
</feature>
<feature type="turn" evidence="14">
    <location>
        <begin position="27"/>
        <end position="29"/>
    </location>
</feature>
<feature type="strand" evidence="14">
    <location>
        <begin position="35"/>
        <end position="40"/>
    </location>
</feature>
<feature type="turn" evidence="14">
    <location>
        <begin position="41"/>
        <end position="44"/>
    </location>
</feature>
<feature type="strand" evidence="14">
    <location>
        <begin position="45"/>
        <end position="53"/>
    </location>
</feature>
<proteinExistence type="evidence at protein level"/>
<gene>
    <name type="primary">rpmG</name>
    <name type="ordered locus">b3636</name>
    <name type="ordered locus">JW3611</name>
</gene>
<reference key="1">
    <citation type="journal article" date="1981" name="Mol. Gen. Genet.">
        <title>Cloning and the nucleotide sequence of the genes for Escherichia coli ribosomal proteins L28 (rpmB) and L33 (rpmG).</title>
        <authorList>
            <person name="Lee J.S."/>
            <person name="An G."/>
            <person name="Friesen J.D."/>
            <person name="Isono K."/>
        </authorList>
    </citation>
    <scope>NUCLEOTIDE SEQUENCE [GENOMIC DNA]</scope>
</reference>
<reference key="2">
    <citation type="journal article" date="1993" name="Genomics">
        <title>DNA sequence and analysis of 136 kilobases of the Escherichia coli genome: organizational symmetry around the origin of replication.</title>
        <authorList>
            <person name="Burland V.D."/>
            <person name="Plunkett G. III"/>
            <person name="Daniels D.L."/>
            <person name="Blattner F.R."/>
        </authorList>
    </citation>
    <scope>NUCLEOTIDE SEQUENCE [LARGE SCALE GENOMIC DNA]</scope>
    <source>
        <strain>K12 / MG1655 / ATCC 47076</strain>
    </source>
</reference>
<reference key="3">
    <citation type="journal article" date="1997" name="Science">
        <title>The complete genome sequence of Escherichia coli K-12.</title>
        <authorList>
            <person name="Blattner F.R."/>
            <person name="Plunkett G. III"/>
            <person name="Bloch C.A."/>
            <person name="Perna N.T."/>
            <person name="Burland V."/>
            <person name="Riley M."/>
            <person name="Collado-Vides J."/>
            <person name="Glasner J.D."/>
            <person name="Rode C.K."/>
            <person name="Mayhew G.F."/>
            <person name="Gregor J."/>
            <person name="Davis N.W."/>
            <person name="Kirkpatrick H.A."/>
            <person name="Goeden M.A."/>
            <person name="Rose D.J."/>
            <person name="Mau B."/>
            <person name="Shao Y."/>
        </authorList>
    </citation>
    <scope>NUCLEOTIDE SEQUENCE [LARGE SCALE GENOMIC DNA]</scope>
    <source>
        <strain>K12 / MG1655 / ATCC 47076</strain>
    </source>
</reference>
<reference key="4">
    <citation type="journal article" date="2006" name="Mol. Syst. Biol.">
        <title>Highly accurate genome sequences of Escherichia coli K-12 strains MG1655 and W3110.</title>
        <authorList>
            <person name="Hayashi K."/>
            <person name="Morooka N."/>
            <person name="Yamamoto Y."/>
            <person name="Fujita K."/>
            <person name="Isono K."/>
            <person name="Choi S."/>
            <person name="Ohtsubo E."/>
            <person name="Baba T."/>
            <person name="Wanner B.L."/>
            <person name="Mori H."/>
            <person name="Horiuchi T."/>
        </authorList>
    </citation>
    <scope>NUCLEOTIDE SEQUENCE [LARGE SCALE GENOMIC DNA]</scope>
    <source>
        <strain>K12 / W3110 / ATCC 27325 / DSM 5911</strain>
    </source>
</reference>
<reference key="5">
    <citation type="journal article" date="1976" name="FEBS Lett.">
        <title>Primary structure of protein L33 from the large subunit of the Escherichia coli ribosome.</title>
        <authorList>
            <person name="Wittmann-Liebold B."/>
            <person name="Pannenbecker R."/>
        </authorList>
    </citation>
    <scope>PROTEIN SEQUENCE OF 2-55</scope>
    <scope>SUBUNIT</scope>
    <scope>METHYLATION AT ALA-2</scope>
    <source>
        <strain>K</strain>
    </source>
</reference>
<reference key="6">
    <citation type="journal article" date="1995" name="Nucleic Acids Res.">
        <title>The ribosomal neighbourhood of the central fold of tRNA: cross-links from position 47 of tRNA located at the A, P or E site.</title>
        <authorList>
            <person name="Osswald M."/>
            <person name="Doering T."/>
            <person name="Brimacombe R."/>
        </authorList>
    </citation>
    <scope>CROSS-LINKING TO THE TRNA CENTRAL FOLD</scope>
    <source>
        <strain>MRE-600</strain>
    </source>
</reference>
<reference key="7">
    <citation type="journal article" date="1999" name="Anal. Biochem.">
        <title>Observation of Escherichia coli ribosomal proteins and their posttranslational modifications by mass spectrometry.</title>
        <authorList>
            <person name="Arnold R.J."/>
            <person name="Reilly J.P."/>
        </authorList>
    </citation>
    <scope>MASS SPECTROMETRY</scope>
    <scope>SUBUNIT</scope>
    <source>
        <strain>K12 / ATCC 25404 / DSM 5698 / NCIMB 11290</strain>
    </source>
</reference>
<reference key="8">
    <citation type="journal article" date="2014" name="Curr. Opin. Struct. Biol.">
        <title>A new system for naming ribosomal proteins.</title>
        <authorList>
            <person name="Ban N."/>
            <person name="Beckmann R."/>
            <person name="Cate J.H.D."/>
            <person name="Dinman J.D."/>
            <person name="Dragon F."/>
            <person name="Ellis S.R."/>
            <person name="Lafontaine D.L.J."/>
            <person name="Lindahl L."/>
            <person name="Liljas A."/>
            <person name="Lipton J.M."/>
            <person name="McAlear M.A."/>
            <person name="Moore P.B."/>
            <person name="Noller H.F."/>
            <person name="Ortega J."/>
            <person name="Panse V.G."/>
            <person name="Ramakrishnan V."/>
            <person name="Spahn C.M.T."/>
            <person name="Steitz T.A."/>
            <person name="Tchorzewski M."/>
            <person name="Tollervey D."/>
            <person name="Warren A.J."/>
            <person name="Williamson J.R."/>
            <person name="Wilson D."/>
            <person name="Yonath A."/>
            <person name="Yusupov M."/>
        </authorList>
    </citation>
    <scope>NOMENCLATURE</scope>
</reference>
<reference key="9">
    <citation type="journal article" date="2003" name="Cell">
        <title>Study of the structural dynamics of the E. coli 70S ribosome using real-space refinement.</title>
        <authorList>
            <person name="Gao H."/>
            <person name="Sengupta J."/>
            <person name="Valle M."/>
            <person name="Korostelev A."/>
            <person name="Eswar N."/>
            <person name="Stagg S.M."/>
            <person name="Van Roey P."/>
            <person name="Agrawal R.K."/>
            <person name="Harvey S.C."/>
            <person name="Sali A."/>
            <person name="Chapman M.S."/>
            <person name="Frank J."/>
        </authorList>
    </citation>
    <scope>STRUCTURE BY ELECTRON MICROSCOPY (11.50 ANGSTROMS)</scope>
    <scope>SUBUNIT</scope>
    <source>
        <strain>MRE-600</strain>
    </source>
</reference>
<reference key="10">
    <citation type="journal article" date="2005" name="Science">
        <title>Structures of the bacterial ribosome at 3.5 A resolution.</title>
        <authorList>
            <person name="Schuwirth B.S."/>
            <person name="Borovinskaya M.A."/>
            <person name="Hau C.W."/>
            <person name="Zhang W."/>
            <person name="Vila-Sanjurjo A."/>
            <person name="Holton J.M."/>
            <person name="Cate J.H.D."/>
        </authorList>
    </citation>
    <scope>X-RAY CRYSTALLOGRAPHY (3.46 ANGSTROMS) OF 2 DIFFERENT RIBOSOME STRUCTURES</scope>
    <scope>SUBUNIT</scope>
    <source>
        <strain>MRE-600</strain>
    </source>
</reference>
<reference key="11">
    <citation type="journal article" date="2014" name="Cell Rep.">
        <title>Molecular basis for the ribosome functioning as an L-tryptophan sensor.</title>
        <authorList>
            <person name="Bischoff L."/>
            <person name="Berninghausen O."/>
            <person name="Beckmann R."/>
        </authorList>
    </citation>
    <scope>STRUCTURE BY ELECTRON MICROSCOPY (3.80 ANGSTROMS) OF 4-53 IN TNAC-STALLED 50S RIBOSOMAL SUBUNIT</scope>
    <scope>SUBUNIT</scope>
    <source>
        <strain>K12 / A19 / KC6</strain>
    </source>
</reference>
<reference key="12">
    <citation type="journal article" date="2014" name="PLoS Biol.">
        <title>Structural and functional insights into the mode of action of a universally conserved Obg GTPase.</title>
        <authorList>
            <person name="Feng B."/>
            <person name="Mandava C.S."/>
            <person name="Guo Q."/>
            <person name="Wang J."/>
            <person name="Cao W."/>
            <person name="Li N."/>
            <person name="Zhang Y."/>
            <person name="Zhang Y."/>
            <person name="Wang Z."/>
            <person name="Wu J."/>
            <person name="Sanyal S."/>
            <person name="Lei J."/>
            <person name="Gao N."/>
        </authorList>
    </citation>
    <scope>STRUCTURE BY ELECTRON MICROSCOPY (5.5 ANGSTROMS) OF 2-55 OF 50S RIBOSOMAL SUBUNIT IN COMPLEX WITH OBGE AND GMP-PNP</scope>
    <scope>SUBUNIT</scope>
</reference>
<reference key="13">
    <citation type="journal article" date="2017" name="Nature">
        <title>Mechanistic insights into the alternative translation termination by ArfA and RF2.</title>
        <authorList>
            <person name="Ma C."/>
            <person name="Kurita D."/>
            <person name="Li N."/>
            <person name="Chen Y."/>
            <person name="Himeno H."/>
            <person name="Gao N."/>
        </authorList>
    </citation>
    <scope>STRUCTURE BY ELECTRON MICROSCOPY (3.0 ANGSTROMS) OF 70S RIBOSOME IN COMPLEX WITH ARFA AND RF2</scope>
    <scope>SUBUNIT</scope>
</reference>
<reference key="14">
    <citation type="journal article" date="2017" name="Nature">
        <title>Structural basis for ArfA-RF2-mediated translation termination on mRNAs lacking stop codons.</title>
        <authorList>
            <person name="Huter P."/>
            <person name="Mueller C."/>
            <person name="Beckert B."/>
            <person name="Arenz S."/>
            <person name="Berninghausen O."/>
            <person name="Beckmann R."/>
            <person name="Wilson D.N."/>
        </authorList>
    </citation>
    <scope>STRUCTURE BY ELECTRON MICROSCOPY (3.1 ANGSTROMS) OF 70S RIBOSOME IN COMPLEX WITH ARFA AND RF2</scope>
    <scope>SUBUNIT</scope>
</reference>
<reference key="15">
    <citation type="journal article" date="2016" name="Science">
        <title>Translational termination without a stop codon.</title>
        <authorList>
            <person name="James N.R."/>
            <person name="Brown A."/>
            <person name="Gordiyenko Y."/>
            <person name="Ramakrishnan V."/>
        </authorList>
    </citation>
    <scope>STRUCTURE BY ELECTRON MICROSCOPY (2.97 ANGSTROMS) OF 70S RIBOSOME IN COMPLEX WITH ARFA AND RF2</scope>
    <scope>SUBUNIT</scope>
</reference>
<reference key="16">
    <citation type="journal article" date="2017" name="Nature">
        <title>Structural basis of co-translational quality control by ArfA and RF2 bound to ribosome.</title>
        <authorList>
            <person name="Zeng F."/>
            <person name="Chen Y."/>
            <person name="Remis J."/>
            <person name="Shekhar M."/>
            <person name="Phillips J.C."/>
            <person name="Tajkhorshid E."/>
            <person name="Jin H."/>
        </authorList>
    </citation>
    <scope>STRUCTURE BY ELECTRON MICROSCOPY (3.52 ANGSTROMS) OF 70S RIBOSOME IN COMPLEX WITH ARFA AND RF2</scope>
    <scope>SUBUNIT</scope>
</reference>
<dbReference type="EMBL" id="J01677">
    <property type="protein sequence ID" value="AAA74100.1"/>
    <property type="molecule type" value="Genomic_DNA"/>
</dbReference>
<dbReference type="EMBL" id="L10328">
    <property type="protein sequence ID" value="AAA61989.1"/>
    <property type="molecule type" value="Genomic_DNA"/>
</dbReference>
<dbReference type="EMBL" id="U00096">
    <property type="protein sequence ID" value="AAC76660.1"/>
    <property type="molecule type" value="Genomic_DNA"/>
</dbReference>
<dbReference type="EMBL" id="AP009048">
    <property type="protein sequence ID" value="BAE77656.1"/>
    <property type="molecule type" value="Genomic_DNA"/>
</dbReference>
<dbReference type="PIR" id="S42444">
    <property type="entry name" value="R5EC33"/>
</dbReference>
<dbReference type="RefSeq" id="NP_418093.1">
    <property type="nucleotide sequence ID" value="NC_000913.3"/>
</dbReference>
<dbReference type="RefSeq" id="WP_001051798.1">
    <property type="nucleotide sequence ID" value="NZ_STEB01000024.1"/>
</dbReference>
<dbReference type="PDB" id="2J28">
    <property type="method" value="EM"/>
    <property type="resolution" value="8.00 A"/>
    <property type="chains" value="1=2-55"/>
</dbReference>
<dbReference type="PDB" id="2RDO">
    <property type="method" value="EM"/>
    <property type="resolution" value="9.10 A"/>
    <property type="chains" value="1=2-55"/>
</dbReference>
<dbReference type="PDB" id="3BBX">
    <property type="method" value="EM"/>
    <property type="resolution" value="10.00 A"/>
    <property type="chains" value="1=2-55"/>
</dbReference>
<dbReference type="PDB" id="3J5L">
    <property type="method" value="EM"/>
    <property type="resolution" value="6.60 A"/>
    <property type="chains" value="1=4-53"/>
</dbReference>
<dbReference type="PDB" id="3J5S">
    <property type="method" value="EM"/>
    <property type="resolution" value="7.50 A"/>
    <property type="chains" value="H=4-53"/>
</dbReference>
<dbReference type="PDB" id="3J7Z">
    <property type="method" value="EM"/>
    <property type="resolution" value="3.90 A"/>
    <property type="chains" value="1=1-55"/>
</dbReference>
<dbReference type="PDB" id="3J9Y">
    <property type="method" value="EM"/>
    <property type="resolution" value="3.90 A"/>
    <property type="chains" value="1=1-55"/>
</dbReference>
<dbReference type="PDB" id="3J9Z">
    <property type="method" value="EM"/>
    <property type="resolution" value="3.60 A"/>
    <property type="chains" value="L2=2-55"/>
</dbReference>
<dbReference type="PDB" id="3JA1">
    <property type="method" value="EM"/>
    <property type="resolution" value="3.60 A"/>
    <property type="chains" value="L4=2-55"/>
</dbReference>
<dbReference type="PDB" id="3JBU">
    <property type="method" value="EM"/>
    <property type="resolution" value="3.64 A"/>
    <property type="chains" value="4=1-55"/>
</dbReference>
<dbReference type="PDB" id="3JBV">
    <property type="method" value="EM"/>
    <property type="resolution" value="3.32 A"/>
    <property type="chains" value="4=1-55"/>
</dbReference>
<dbReference type="PDB" id="3JCD">
    <property type="method" value="EM"/>
    <property type="resolution" value="3.70 A"/>
    <property type="chains" value="1=1-55"/>
</dbReference>
<dbReference type="PDB" id="3JCE">
    <property type="method" value="EM"/>
    <property type="resolution" value="3.20 A"/>
    <property type="chains" value="1=1-55"/>
</dbReference>
<dbReference type="PDB" id="3JCJ">
    <property type="method" value="EM"/>
    <property type="resolution" value="3.70 A"/>
    <property type="chains" value="a=1-55"/>
</dbReference>
<dbReference type="PDB" id="3JCN">
    <property type="method" value="EM"/>
    <property type="resolution" value="4.60 A"/>
    <property type="chains" value="1=1-55"/>
</dbReference>
<dbReference type="PDB" id="4CSU">
    <property type="method" value="EM"/>
    <property type="resolution" value="5.50 A"/>
    <property type="chains" value="4=2-55"/>
</dbReference>
<dbReference type="PDB" id="4U1U">
    <property type="method" value="X-ray"/>
    <property type="resolution" value="2.95 A"/>
    <property type="chains" value="B1/D1=4-53"/>
</dbReference>
<dbReference type="PDB" id="4U1V">
    <property type="method" value="X-ray"/>
    <property type="resolution" value="3.00 A"/>
    <property type="chains" value="B1/D1=4-53"/>
</dbReference>
<dbReference type="PDB" id="4U20">
    <property type="method" value="X-ray"/>
    <property type="resolution" value="2.90 A"/>
    <property type="chains" value="B1/D1=4-53"/>
</dbReference>
<dbReference type="PDB" id="4U24">
    <property type="method" value="X-ray"/>
    <property type="resolution" value="2.90 A"/>
    <property type="chains" value="B1/D1=4-53"/>
</dbReference>
<dbReference type="PDB" id="4U25">
    <property type="method" value="X-ray"/>
    <property type="resolution" value="2.90 A"/>
    <property type="chains" value="B1/D1=4-53"/>
</dbReference>
<dbReference type="PDB" id="4U26">
    <property type="method" value="X-ray"/>
    <property type="resolution" value="2.80 A"/>
    <property type="chains" value="B1/D1=4-53"/>
</dbReference>
<dbReference type="PDB" id="4U27">
    <property type="method" value="X-ray"/>
    <property type="resolution" value="2.80 A"/>
    <property type="chains" value="B1/D1=4-53"/>
</dbReference>
<dbReference type="PDB" id="4UY8">
    <property type="method" value="EM"/>
    <property type="resolution" value="3.80 A"/>
    <property type="chains" value="1=4-53"/>
</dbReference>
<dbReference type="PDB" id="4V47">
    <property type="method" value="EM"/>
    <property type="resolution" value="12.30 A"/>
    <property type="chains" value="A1=2-55"/>
</dbReference>
<dbReference type="PDB" id="4V48">
    <property type="method" value="EM"/>
    <property type="resolution" value="11.50 A"/>
    <property type="chains" value="A1=2-55"/>
</dbReference>
<dbReference type="PDB" id="4V4H">
    <property type="method" value="X-ray"/>
    <property type="resolution" value="3.46 A"/>
    <property type="chains" value="B1/D1=1-55"/>
</dbReference>
<dbReference type="PDB" id="4V4Q">
    <property type="method" value="X-ray"/>
    <property type="resolution" value="3.46 A"/>
    <property type="chains" value="B1/D1=2-55"/>
</dbReference>
<dbReference type="PDB" id="4V4V">
    <property type="method" value="EM"/>
    <property type="resolution" value="15.00 A"/>
    <property type="chains" value="B1=2-53"/>
</dbReference>
<dbReference type="PDB" id="4V4W">
    <property type="method" value="EM"/>
    <property type="resolution" value="15.00 A"/>
    <property type="chains" value="B1=2-53"/>
</dbReference>
<dbReference type="PDB" id="4V50">
    <property type="method" value="X-ray"/>
    <property type="resolution" value="3.22 A"/>
    <property type="chains" value="B1/D1=2-55"/>
</dbReference>
<dbReference type="PDB" id="4V52">
    <property type="method" value="X-ray"/>
    <property type="resolution" value="3.21 A"/>
    <property type="chains" value="B1/D1=2-55"/>
</dbReference>
<dbReference type="PDB" id="4V53">
    <property type="method" value="X-ray"/>
    <property type="resolution" value="3.54 A"/>
    <property type="chains" value="B1/D1=2-55"/>
</dbReference>
<dbReference type="PDB" id="4V54">
    <property type="method" value="X-ray"/>
    <property type="resolution" value="3.30 A"/>
    <property type="chains" value="B1/D1=2-55"/>
</dbReference>
<dbReference type="PDB" id="4V55">
    <property type="method" value="X-ray"/>
    <property type="resolution" value="4.00 A"/>
    <property type="chains" value="B1/D1=2-55"/>
</dbReference>
<dbReference type="PDB" id="4V56">
    <property type="method" value="X-ray"/>
    <property type="resolution" value="3.93 A"/>
    <property type="chains" value="B1/D1=2-55"/>
</dbReference>
<dbReference type="PDB" id="4V57">
    <property type="method" value="X-ray"/>
    <property type="resolution" value="3.50 A"/>
    <property type="chains" value="B1/D1=2-55"/>
</dbReference>
<dbReference type="PDB" id="4V5B">
    <property type="method" value="X-ray"/>
    <property type="resolution" value="3.74 A"/>
    <property type="chains" value="A1/C1=2-55"/>
</dbReference>
<dbReference type="PDB" id="4V5H">
    <property type="method" value="EM"/>
    <property type="resolution" value="5.80 A"/>
    <property type="chains" value="B4=4-53"/>
</dbReference>
<dbReference type="PDB" id="4V5Y">
    <property type="method" value="X-ray"/>
    <property type="resolution" value="4.45 A"/>
    <property type="chains" value="B1/D1=2-55"/>
</dbReference>
<dbReference type="PDB" id="4V64">
    <property type="method" value="X-ray"/>
    <property type="resolution" value="3.50 A"/>
    <property type="chains" value="B1/D1=2-55"/>
</dbReference>
<dbReference type="PDB" id="4V65">
    <property type="method" value="EM"/>
    <property type="resolution" value="9.00 A"/>
    <property type="chains" value="BU=2-55"/>
</dbReference>
<dbReference type="PDB" id="4V66">
    <property type="method" value="EM"/>
    <property type="resolution" value="9.00 A"/>
    <property type="chains" value="BU=2-55"/>
</dbReference>
<dbReference type="PDB" id="4V69">
    <property type="method" value="EM"/>
    <property type="resolution" value="6.70 A"/>
    <property type="chains" value="B1=4-53"/>
</dbReference>
<dbReference type="PDB" id="4V6C">
    <property type="method" value="X-ray"/>
    <property type="resolution" value="3.19 A"/>
    <property type="chains" value="B1/D1=1-55"/>
</dbReference>
<dbReference type="PDB" id="4V6D">
    <property type="method" value="X-ray"/>
    <property type="resolution" value="3.81 A"/>
    <property type="chains" value="B1/D1=1-55"/>
</dbReference>
<dbReference type="PDB" id="4V6E">
    <property type="method" value="X-ray"/>
    <property type="resolution" value="3.71 A"/>
    <property type="chains" value="B1/D1=1-55"/>
</dbReference>
<dbReference type="PDB" id="4V6K">
    <property type="method" value="EM"/>
    <property type="resolution" value="8.25 A"/>
    <property type="chains" value="Ad=1-55"/>
</dbReference>
<dbReference type="PDB" id="4V6L">
    <property type="method" value="EM"/>
    <property type="resolution" value="13.20 A"/>
    <property type="chains" value="Bd=1-55"/>
</dbReference>
<dbReference type="PDB" id="4V6M">
    <property type="method" value="EM"/>
    <property type="resolution" value="7.10 A"/>
    <property type="chains" value="B1=2-55"/>
</dbReference>
<dbReference type="PDB" id="4V6N">
    <property type="method" value="EM"/>
    <property type="resolution" value="12.10 A"/>
    <property type="chains" value="A4=2-55"/>
</dbReference>
<dbReference type="PDB" id="4V6O">
    <property type="method" value="EM"/>
    <property type="resolution" value="14.70 A"/>
    <property type="chains" value="B4=2-55"/>
</dbReference>
<dbReference type="PDB" id="4V6P">
    <property type="method" value="EM"/>
    <property type="resolution" value="13.50 A"/>
    <property type="chains" value="B4=2-55"/>
</dbReference>
<dbReference type="PDB" id="4V6Q">
    <property type="method" value="EM"/>
    <property type="resolution" value="11.50 A"/>
    <property type="chains" value="B4=2-55"/>
</dbReference>
<dbReference type="PDB" id="4V6R">
    <property type="method" value="EM"/>
    <property type="resolution" value="11.50 A"/>
    <property type="chains" value="B4=2-55"/>
</dbReference>
<dbReference type="PDB" id="4V6S">
    <property type="method" value="EM"/>
    <property type="resolution" value="13.10 A"/>
    <property type="chains" value="A4=2-55"/>
</dbReference>
<dbReference type="PDB" id="4V6T">
    <property type="method" value="EM"/>
    <property type="resolution" value="8.30 A"/>
    <property type="chains" value="B1=4-53"/>
</dbReference>
<dbReference type="PDB" id="4V6V">
    <property type="method" value="EM"/>
    <property type="resolution" value="9.80 A"/>
    <property type="chains" value="B6=2-55"/>
</dbReference>
<dbReference type="PDB" id="4V6Y">
    <property type="method" value="EM"/>
    <property type="resolution" value="12.00 A"/>
    <property type="chains" value="B1=4-53"/>
</dbReference>
<dbReference type="PDB" id="4V6Z">
    <property type="method" value="EM"/>
    <property type="resolution" value="12.00 A"/>
    <property type="chains" value="B1=4-53"/>
</dbReference>
<dbReference type="PDB" id="4V70">
    <property type="method" value="EM"/>
    <property type="resolution" value="17.00 A"/>
    <property type="chains" value="B1=4-53"/>
</dbReference>
<dbReference type="PDB" id="4V71">
    <property type="method" value="EM"/>
    <property type="resolution" value="20.00 A"/>
    <property type="chains" value="B1=4-53"/>
</dbReference>
<dbReference type="PDB" id="4V72">
    <property type="method" value="EM"/>
    <property type="resolution" value="13.00 A"/>
    <property type="chains" value="B1=4-53"/>
</dbReference>
<dbReference type="PDB" id="4V73">
    <property type="method" value="EM"/>
    <property type="resolution" value="15.00 A"/>
    <property type="chains" value="B1=4-53"/>
</dbReference>
<dbReference type="PDB" id="4V74">
    <property type="method" value="EM"/>
    <property type="resolution" value="17.00 A"/>
    <property type="chains" value="B1=4-53"/>
</dbReference>
<dbReference type="PDB" id="4V75">
    <property type="method" value="EM"/>
    <property type="resolution" value="12.00 A"/>
    <property type="chains" value="B1=4-53"/>
</dbReference>
<dbReference type="PDB" id="4V76">
    <property type="method" value="EM"/>
    <property type="resolution" value="17.00 A"/>
    <property type="chains" value="B1=4-53"/>
</dbReference>
<dbReference type="PDB" id="4V77">
    <property type="method" value="EM"/>
    <property type="resolution" value="17.00 A"/>
    <property type="chains" value="B1=4-53"/>
</dbReference>
<dbReference type="PDB" id="4V78">
    <property type="method" value="EM"/>
    <property type="resolution" value="20.00 A"/>
    <property type="chains" value="B1=4-53"/>
</dbReference>
<dbReference type="PDB" id="4V79">
    <property type="method" value="EM"/>
    <property type="resolution" value="15.00 A"/>
    <property type="chains" value="B1=4-53"/>
</dbReference>
<dbReference type="PDB" id="4V7A">
    <property type="method" value="EM"/>
    <property type="resolution" value="9.00 A"/>
    <property type="chains" value="B1=4-53"/>
</dbReference>
<dbReference type="PDB" id="4V7B">
    <property type="method" value="EM"/>
    <property type="resolution" value="6.80 A"/>
    <property type="chains" value="B1=1-55"/>
</dbReference>
<dbReference type="PDB" id="4V7C">
    <property type="method" value="EM"/>
    <property type="resolution" value="7.60 A"/>
    <property type="chains" value="B4=2-55"/>
</dbReference>
<dbReference type="PDB" id="4V7D">
    <property type="method" value="EM"/>
    <property type="resolution" value="7.60 A"/>
    <property type="chains" value="A5=2-55"/>
</dbReference>
<dbReference type="PDB" id="4V7I">
    <property type="method" value="EM"/>
    <property type="resolution" value="9.60 A"/>
    <property type="chains" value="A1=1-55"/>
</dbReference>
<dbReference type="PDB" id="4V7S">
    <property type="method" value="X-ray"/>
    <property type="resolution" value="3.25 A"/>
    <property type="chains" value="B1/D1=4-53"/>
</dbReference>
<dbReference type="PDB" id="4V7T">
    <property type="method" value="X-ray"/>
    <property type="resolution" value="3.19 A"/>
    <property type="chains" value="B1/D1=4-53"/>
</dbReference>
<dbReference type="PDB" id="4V7U">
    <property type="method" value="X-ray"/>
    <property type="resolution" value="3.10 A"/>
    <property type="chains" value="B1/D1=4-53"/>
</dbReference>
<dbReference type="PDB" id="4V7V">
    <property type="method" value="X-ray"/>
    <property type="resolution" value="3.29 A"/>
    <property type="chains" value="B1/D1=4-53"/>
</dbReference>
<dbReference type="PDB" id="4V85">
    <property type="method" value="X-ray"/>
    <property type="resolution" value="3.20 A"/>
    <property type="chains" value="B5=1-55"/>
</dbReference>
<dbReference type="PDB" id="4V89">
    <property type="method" value="X-ray"/>
    <property type="resolution" value="3.70 A"/>
    <property type="chains" value="B5=1-55"/>
</dbReference>
<dbReference type="PDB" id="4V9C">
    <property type="method" value="X-ray"/>
    <property type="resolution" value="3.30 A"/>
    <property type="chains" value="B1/D1=1-55"/>
</dbReference>
<dbReference type="PDB" id="4V9D">
    <property type="method" value="X-ray"/>
    <property type="resolution" value="3.00 A"/>
    <property type="chains" value="C1/D1=4-53"/>
</dbReference>
<dbReference type="PDB" id="4V9O">
    <property type="method" value="X-ray"/>
    <property type="resolution" value="2.90 A"/>
    <property type="chains" value="A1/C1/E1/G1=1-55"/>
</dbReference>
<dbReference type="PDB" id="4V9P">
    <property type="method" value="X-ray"/>
    <property type="resolution" value="2.90 A"/>
    <property type="chains" value="A1/C1/E1/G1=1-55"/>
</dbReference>
<dbReference type="PDB" id="4WF1">
    <property type="method" value="X-ray"/>
    <property type="resolution" value="3.09 A"/>
    <property type="chains" value="B1/D1=4-53"/>
</dbReference>
<dbReference type="PDB" id="4WOI">
    <property type="method" value="X-ray"/>
    <property type="resolution" value="3.00 A"/>
    <property type="chains" value="B1/C1=1-55"/>
</dbReference>
<dbReference type="PDB" id="4WWW">
    <property type="method" value="X-ray"/>
    <property type="resolution" value="3.10 A"/>
    <property type="chains" value="R1/Y1=4-53"/>
</dbReference>
<dbReference type="PDB" id="4YBB">
    <property type="method" value="X-ray"/>
    <property type="resolution" value="2.10 A"/>
    <property type="chains" value="C2/D2=4-54"/>
</dbReference>
<dbReference type="PDB" id="5ADY">
    <property type="method" value="EM"/>
    <property type="resolution" value="4.50 A"/>
    <property type="chains" value="1=1-55"/>
</dbReference>
<dbReference type="PDB" id="5AFI">
    <property type="method" value="EM"/>
    <property type="resolution" value="2.90 A"/>
    <property type="chains" value="1=1-55"/>
</dbReference>
<dbReference type="PDB" id="5AKA">
    <property type="method" value="EM"/>
    <property type="resolution" value="5.70 A"/>
    <property type="chains" value="1=2-55"/>
</dbReference>
<dbReference type="PDB" id="5GAD">
    <property type="method" value="EM"/>
    <property type="resolution" value="3.70 A"/>
    <property type="chains" value="c=1-55"/>
</dbReference>
<dbReference type="PDB" id="5GAE">
    <property type="method" value="EM"/>
    <property type="resolution" value="3.33 A"/>
    <property type="chains" value="c=1-55"/>
</dbReference>
<dbReference type="PDB" id="5GAF">
    <property type="method" value="EM"/>
    <property type="resolution" value="4.30 A"/>
    <property type="chains" value="c=4-54"/>
</dbReference>
<dbReference type="PDB" id="5GAG">
    <property type="method" value="EM"/>
    <property type="resolution" value="3.80 A"/>
    <property type="chains" value="c=1-55"/>
</dbReference>
<dbReference type="PDB" id="5GAH">
    <property type="method" value="EM"/>
    <property type="resolution" value="3.80 A"/>
    <property type="chains" value="c=1-55"/>
</dbReference>
<dbReference type="PDB" id="5H5U">
    <property type="method" value="EM"/>
    <property type="resolution" value="3.00 A"/>
    <property type="chains" value="c=2-55"/>
</dbReference>
<dbReference type="PDB" id="5IQR">
    <property type="method" value="EM"/>
    <property type="resolution" value="3.00 A"/>
    <property type="chains" value="c=1-55"/>
</dbReference>
<dbReference type="PDB" id="5IT8">
    <property type="method" value="X-ray"/>
    <property type="resolution" value="3.12 A"/>
    <property type="chains" value="C2/D2=4-54"/>
</dbReference>
<dbReference type="PDB" id="5J5B">
    <property type="method" value="X-ray"/>
    <property type="resolution" value="2.80 A"/>
    <property type="chains" value="C2/D2=4-54"/>
</dbReference>
<dbReference type="PDB" id="5J7L">
    <property type="method" value="X-ray"/>
    <property type="resolution" value="3.00 A"/>
    <property type="chains" value="C2/D2=4-54"/>
</dbReference>
<dbReference type="PDB" id="5J88">
    <property type="method" value="X-ray"/>
    <property type="resolution" value="3.32 A"/>
    <property type="chains" value="C2/D2=4-54"/>
</dbReference>
<dbReference type="PDB" id="5J8A">
    <property type="method" value="X-ray"/>
    <property type="resolution" value="3.10 A"/>
    <property type="chains" value="C2/D2=4-54"/>
</dbReference>
<dbReference type="PDB" id="5J91">
    <property type="method" value="X-ray"/>
    <property type="resolution" value="2.96 A"/>
    <property type="chains" value="C2/D2=4-54"/>
</dbReference>
<dbReference type="PDB" id="5JC9">
    <property type="method" value="X-ray"/>
    <property type="resolution" value="3.03 A"/>
    <property type="chains" value="C2/D2=4-54"/>
</dbReference>
<dbReference type="PDB" id="5JTE">
    <property type="method" value="EM"/>
    <property type="resolution" value="3.60 A"/>
    <property type="chains" value="B1=1-55"/>
</dbReference>
<dbReference type="PDB" id="5JU8">
    <property type="method" value="EM"/>
    <property type="resolution" value="3.60 A"/>
    <property type="chains" value="B1=1-55"/>
</dbReference>
<dbReference type="PDB" id="5KCR">
    <property type="method" value="EM"/>
    <property type="resolution" value="3.60 A"/>
    <property type="chains" value="16=1-55"/>
</dbReference>
<dbReference type="PDB" id="5KCS">
    <property type="method" value="EM"/>
    <property type="resolution" value="3.90 A"/>
    <property type="chains" value="16=1-55"/>
</dbReference>
<dbReference type="PDB" id="5KPS">
    <property type="method" value="EM"/>
    <property type="resolution" value="3.90 A"/>
    <property type="chains" value="3=1-55"/>
</dbReference>
<dbReference type="PDB" id="5KPV">
    <property type="method" value="EM"/>
    <property type="resolution" value="4.10 A"/>
    <property type="chains" value="2=1-55"/>
</dbReference>
<dbReference type="PDB" id="5KPW">
    <property type="method" value="EM"/>
    <property type="resolution" value="3.90 A"/>
    <property type="chains" value="2=1-55"/>
</dbReference>
<dbReference type="PDB" id="5KPX">
    <property type="method" value="EM"/>
    <property type="resolution" value="3.90 A"/>
    <property type="chains" value="2=1-55"/>
</dbReference>
<dbReference type="PDB" id="5L3P">
    <property type="method" value="EM"/>
    <property type="resolution" value="3.70 A"/>
    <property type="chains" value="6=1-55"/>
</dbReference>
<dbReference type="PDB" id="5LZA">
    <property type="method" value="EM"/>
    <property type="resolution" value="3.60 A"/>
    <property type="chains" value="1=4-53"/>
</dbReference>
<dbReference type="PDB" id="5LZB">
    <property type="method" value="EM"/>
    <property type="resolution" value="5.30 A"/>
    <property type="chains" value="1=4-53"/>
</dbReference>
<dbReference type="PDB" id="5LZC">
    <property type="method" value="EM"/>
    <property type="resolution" value="4.80 A"/>
    <property type="chains" value="1=4-53"/>
</dbReference>
<dbReference type="PDB" id="5LZD">
    <property type="method" value="EM"/>
    <property type="resolution" value="3.40 A"/>
    <property type="chains" value="1=4-53"/>
</dbReference>
<dbReference type="PDB" id="5LZE">
    <property type="method" value="EM"/>
    <property type="resolution" value="3.50 A"/>
    <property type="chains" value="1=4-53"/>
</dbReference>
<dbReference type="PDB" id="5LZF">
    <property type="method" value="EM"/>
    <property type="resolution" value="4.60 A"/>
    <property type="chains" value="1=4-53"/>
</dbReference>
<dbReference type="PDB" id="5MDV">
    <property type="method" value="EM"/>
    <property type="resolution" value="2.97 A"/>
    <property type="chains" value="c=1-55"/>
</dbReference>
<dbReference type="PDB" id="5MDW">
    <property type="method" value="EM"/>
    <property type="resolution" value="3.06 A"/>
    <property type="chains" value="c=1-55"/>
</dbReference>
<dbReference type="PDB" id="5MDY">
    <property type="method" value="EM"/>
    <property type="resolution" value="3.35 A"/>
    <property type="chains" value="c=1-55"/>
</dbReference>
<dbReference type="PDB" id="5MDZ">
    <property type="method" value="EM"/>
    <property type="resolution" value="3.10 A"/>
    <property type="chains" value="c=1-55"/>
</dbReference>
<dbReference type="PDB" id="5MGP">
    <property type="method" value="EM"/>
    <property type="resolution" value="3.10 A"/>
    <property type="chains" value="1=4-53"/>
</dbReference>
<dbReference type="PDB" id="5NCO">
    <property type="method" value="EM"/>
    <property type="resolution" value="4.80 A"/>
    <property type="chains" value="c=4-54"/>
</dbReference>
<dbReference type="PDB" id="5NP6">
    <property type="method" value="EM"/>
    <property type="resolution" value="3.60 A"/>
    <property type="chains" value="z=4-53"/>
</dbReference>
<dbReference type="PDB" id="5NWY">
    <property type="method" value="EM"/>
    <property type="resolution" value="2.93 A"/>
    <property type="chains" value="o=1-55"/>
</dbReference>
<dbReference type="PDB" id="5O2R">
    <property type="method" value="EM"/>
    <property type="resolution" value="3.40 A"/>
    <property type="chains" value="1=4-53"/>
</dbReference>
<dbReference type="PDB" id="5U4I">
    <property type="method" value="EM"/>
    <property type="resolution" value="3.50 A"/>
    <property type="chains" value="2=1-55"/>
</dbReference>
<dbReference type="PDB" id="5U9F">
    <property type="method" value="EM"/>
    <property type="resolution" value="3.20 A"/>
    <property type="chains" value="31=1-55"/>
</dbReference>
<dbReference type="PDB" id="5U9G">
    <property type="method" value="EM"/>
    <property type="resolution" value="3.20 A"/>
    <property type="chains" value="31=1-55"/>
</dbReference>
<dbReference type="PDB" id="5UYK">
    <property type="method" value="EM"/>
    <property type="resolution" value="3.90 A"/>
    <property type="chains" value="31=4-53"/>
</dbReference>
<dbReference type="PDB" id="5UYL">
    <property type="method" value="EM"/>
    <property type="resolution" value="3.60 A"/>
    <property type="chains" value="31=4-53"/>
</dbReference>
<dbReference type="PDB" id="5UYM">
    <property type="method" value="EM"/>
    <property type="resolution" value="3.20 A"/>
    <property type="chains" value="31=4-53"/>
</dbReference>
<dbReference type="PDB" id="5UYN">
    <property type="method" value="EM"/>
    <property type="resolution" value="4.00 A"/>
    <property type="chains" value="31=4-53"/>
</dbReference>
<dbReference type="PDB" id="5UYP">
    <property type="method" value="EM"/>
    <property type="resolution" value="3.90 A"/>
    <property type="chains" value="31=4-53"/>
</dbReference>
<dbReference type="PDB" id="5UYQ">
    <property type="method" value="EM"/>
    <property type="resolution" value="3.80 A"/>
    <property type="chains" value="31=4-53"/>
</dbReference>
<dbReference type="PDB" id="5WDT">
    <property type="method" value="EM"/>
    <property type="resolution" value="3.00 A"/>
    <property type="chains" value="1=4-54"/>
</dbReference>
<dbReference type="PDB" id="5WE4">
    <property type="method" value="EM"/>
    <property type="resolution" value="3.10 A"/>
    <property type="chains" value="1=4-54"/>
</dbReference>
<dbReference type="PDB" id="5WE6">
    <property type="method" value="EM"/>
    <property type="resolution" value="3.40 A"/>
    <property type="chains" value="1=4-54"/>
</dbReference>
<dbReference type="PDB" id="5WF0">
    <property type="method" value="EM"/>
    <property type="resolution" value="3.60 A"/>
    <property type="chains" value="1=4-54"/>
</dbReference>
<dbReference type="PDB" id="5WFK">
    <property type="method" value="EM"/>
    <property type="resolution" value="3.40 A"/>
    <property type="chains" value="1=4-54"/>
</dbReference>
<dbReference type="PDB" id="5WFS">
    <property type="method" value="EM"/>
    <property type="resolution" value="3.00 A"/>
    <property type="chains" value="1=4-54"/>
</dbReference>
<dbReference type="PDB" id="6BU8">
    <property type="method" value="EM"/>
    <property type="resolution" value="3.50 A"/>
    <property type="chains" value="31=4-53"/>
</dbReference>
<dbReference type="PDB" id="6BY1">
    <property type="method" value="X-ray"/>
    <property type="resolution" value="3.94 A"/>
    <property type="chains" value="C2/D2=4-53"/>
</dbReference>
<dbReference type="PDB" id="6C4I">
    <property type="method" value="EM"/>
    <property type="resolution" value="3.24 A"/>
    <property type="chains" value="3=4-55"/>
</dbReference>
<dbReference type="PDB" id="6DNC">
    <property type="method" value="EM"/>
    <property type="resolution" value="3.70 A"/>
    <property type="chains" value="GA=1-55"/>
</dbReference>
<dbReference type="PDB" id="6ENF">
    <property type="method" value="EM"/>
    <property type="resolution" value="3.20 A"/>
    <property type="chains" value="1=4-53"/>
</dbReference>
<dbReference type="PDB" id="6ENJ">
    <property type="method" value="EM"/>
    <property type="resolution" value="3.70 A"/>
    <property type="chains" value="1=4-53"/>
</dbReference>
<dbReference type="PDB" id="6ENU">
    <property type="method" value="EM"/>
    <property type="resolution" value="3.10 A"/>
    <property type="chains" value="1=4-53"/>
</dbReference>
<dbReference type="PDB" id="6GBZ">
    <property type="method" value="EM"/>
    <property type="resolution" value="3.80 A"/>
    <property type="chains" value="1=4-53"/>
</dbReference>
<dbReference type="PDB" id="6GC0">
    <property type="method" value="EM"/>
    <property type="resolution" value="3.80 A"/>
    <property type="chains" value="1=4-53"/>
</dbReference>
<dbReference type="PDB" id="6GC8">
    <property type="method" value="EM"/>
    <property type="resolution" value="3.80 A"/>
    <property type="chains" value="1=4-53"/>
</dbReference>
<dbReference type="PDB" id="6GWT">
    <property type="method" value="EM"/>
    <property type="resolution" value="3.80 A"/>
    <property type="chains" value="1=4-53"/>
</dbReference>
<dbReference type="PDB" id="6GXM">
    <property type="method" value="EM"/>
    <property type="resolution" value="3.80 A"/>
    <property type="chains" value="1=4-53"/>
</dbReference>
<dbReference type="PDB" id="6GXN">
    <property type="method" value="EM"/>
    <property type="resolution" value="3.90 A"/>
    <property type="chains" value="1=4-53"/>
</dbReference>
<dbReference type="PDB" id="6GXO">
    <property type="method" value="EM"/>
    <property type="resolution" value="3.90 A"/>
    <property type="chains" value="1=4-53"/>
</dbReference>
<dbReference type="PDB" id="6GXP">
    <property type="method" value="EM"/>
    <property type="resolution" value="4.40 A"/>
    <property type="chains" value="1=4-53"/>
</dbReference>
<dbReference type="PDB" id="6H4N">
    <property type="method" value="EM"/>
    <property type="resolution" value="3.00 A"/>
    <property type="chains" value="1=4-53"/>
</dbReference>
<dbReference type="PDB" id="6H58">
    <property type="method" value="EM"/>
    <property type="resolution" value="7.90 A"/>
    <property type="chains" value="1/11=4-53"/>
</dbReference>
<dbReference type="PDB" id="6HRM">
    <property type="method" value="EM"/>
    <property type="resolution" value="2.96 A"/>
    <property type="chains" value="c=4-55"/>
</dbReference>
<dbReference type="PDB" id="6I0Y">
    <property type="method" value="EM"/>
    <property type="resolution" value="3.20 A"/>
    <property type="chains" value="1=1-55"/>
</dbReference>
<dbReference type="PDB" id="6I7V">
    <property type="method" value="X-ray"/>
    <property type="resolution" value="2.90 A"/>
    <property type="chains" value="C2/D2=4-53"/>
</dbReference>
<dbReference type="PDB" id="6O9J">
    <property type="method" value="EM"/>
    <property type="resolution" value="3.90 A"/>
    <property type="chains" value="2=2-55"/>
</dbReference>
<dbReference type="PDB" id="6O9K">
    <property type="method" value="EM"/>
    <property type="resolution" value="4.00 A"/>
    <property type="chains" value="6=4-53"/>
</dbReference>
<dbReference type="PDB" id="6OFX">
    <property type="method" value="EM"/>
    <property type="resolution" value="3.30 A"/>
    <property type="chains" value="C=4-53"/>
</dbReference>
<dbReference type="PDB" id="6OG7">
    <property type="method" value="EM"/>
    <property type="resolution" value="3.30 A"/>
    <property type="chains" value="C=4-53"/>
</dbReference>
<dbReference type="PDB" id="6OGF">
    <property type="method" value="EM"/>
    <property type="resolution" value="3.90 A"/>
    <property type="chains" value="C=1-55"/>
</dbReference>
<dbReference type="PDB" id="6OGG">
    <property type="method" value="EM"/>
    <property type="resolution" value="4.20 A"/>
    <property type="chains" value="C=1-55"/>
</dbReference>
<dbReference type="PDB" id="6OGI">
    <property type="method" value="EM"/>
    <property type="resolution" value="3.40 A"/>
    <property type="chains" value="C=1-55"/>
</dbReference>
<dbReference type="PDB" id="6OM6">
    <property type="method" value="EM"/>
    <property type="resolution" value="3.10 A"/>
    <property type="chains" value="c=1-55"/>
</dbReference>
<dbReference type="PDB" id="6ORE">
    <property type="method" value="EM"/>
    <property type="resolution" value="2.90 A"/>
    <property type="chains" value="c=4-55"/>
</dbReference>
<dbReference type="PDB" id="6ORL">
    <property type="method" value="EM"/>
    <property type="resolution" value="3.50 A"/>
    <property type="chains" value="c=4-55"/>
</dbReference>
<dbReference type="PDB" id="6OSK">
    <property type="method" value="EM"/>
    <property type="resolution" value="3.60 A"/>
    <property type="chains" value="c=4-55"/>
</dbReference>
<dbReference type="PDB" id="6OSQ">
    <property type="method" value="EM"/>
    <property type="resolution" value="3.50 A"/>
    <property type="chains" value="c=4-55"/>
</dbReference>
<dbReference type="PDB" id="6OST">
    <property type="method" value="EM"/>
    <property type="resolution" value="4.20 A"/>
    <property type="chains" value="c=4-55"/>
</dbReference>
<dbReference type="PDB" id="6OT3">
    <property type="method" value="EM"/>
    <property type="resolution" value="3.90 A"/>
    <property type="chains" value="c=4-55"/>
</dbReference>
<dbReference type="PDB" id="6OUO">
    <property type="method" value="EM"/>
    <property type="resolution" value="3.70 A"/>
    <property type="chains" value="c=4-55"/>
</dbReference>
<dbReference type="PDB" id="6PJ6">
    <property type="method" value="EM"/>
    <property type="resolution" value="2.20 A"/>
    <property type="chains" value="j=4-53"/>
</dbReference>
<dbReference type="PDB" id="6Q97">
    <property type="method" value="EM"/>
    <property type="resolution" value="3.90 A"/>
    <property type="chains" value="c=4-55"/>
</dbReference>
<dbReference type="PDB" id="6Q98">
    <property type="method" value="EM"/>
    <property type="resolution" value="4.30 A"/>
    <property type="chains" value="c=1-55"/>
</dbReference>
<dbReference type="PDB" id="6Q9A">
    <property type="method" value="EM"/>
    <property type="resolution" value="3.70 A"/>
    <property type="chains" value="c=4-54"/>
</dbReference>
<dbReference type="PDB" id="6QDW">
    <property type="method" value="EM"/>
    <property type="resolution" value="2.83 A"/>
    <property type="chains" value="4=1-55"/>
</dbReference>
<dbReference type="PDB" id="6QUL">
    <property type="method" value="EM"/>
    <property type="resolution" value="3.00 A"/>
    <property type="chains" value="c=1-55"/>
</dbReference>
<dbReference type="PDB" id="6S0K">
    <property type="method" value="EM"/>
    <property type="resolution" value="3.10 A"/>
    <property type="chains" value="c=1-55"/>
</dbReference>
<dbReference type="PDB" id="6SZS">
    <property type="method" value="EM"/>
    <property type="resolution" value="3.06 A"/>
    <property type="chains" value="1=1-55"/>
</dbReference>
<dbReference type="PDB" id="6TBV">
    <property type="method" value="EM"/>
    <property type="resolution" value="2.70 A"/>
    <property type="chains" value="L331=1-55"/>
</dbReference>
<dbReference type="PDB" id="6TC3">
    <property type="method" value="EM"/>
    <property type="resolution" value="2.70 A"/>
    <property type="chains" value="L331=1-55"/>
</dbReference>
<dbReference type="PDB" id="6U48">
    <property type="method" value="EM"/>
    <property type="resolution" value="2.87 A"/>
    <property type="chains" value="C2=4-53"/>
</dbReference>
<dbReference type="PDB" id="6VU3">
    <property type="method" value="EM"/>
    <property type="resolution" value="3.70 A"/>
    <property type="chains" value="k=4-55"/>
</dbReference>
<dbReference type="PDB" id="6VWL">
    <property type="method" value="EM"/>
    <property type="resolution" value="3.10 A"/>
    <property type="chains" value="Z=1-55"/>
</dbReference>
<dbReference type="PDB" id="6VWM">
    <property type="method" value="EM"/>
    <property type="resolution" value="3.40 A"/>
    <property type="chains" value="Z=1-55"/>
</dbReference>
<dbReference type="PDB" id="6VWN">
    <property type="method" value="EM"/>
    <property type="resolution" value="3.40 A"/>
    <property type="chains" value="Z=1-55"/>
</dbReference>
<dbReference type="PDB" id="6VYQ">
    <property type="method" value="EM"/>
    <property type="resolution" value="3.70 A"/>
    <property type="chains" value="k=1-55"/>
</dbReference>
<dbReference type="PDB" id="6VYR">
    <property type="method" value="EM"/>
    <property type="resolution" value="3.80 A"/>
    <property type="chains" value="k=1-55"/>
</dbReference>
<dbReference type="PDB" id="6VYS">
    <property type="method" value="EM"/>
    <property type="resolution" value="3.70 A"/>
    <property type="chains" value="k=1-55"/>
</dbReference>
<dbReference type="PDB" id="6VYT">
    <property type="method" value="EM"/>
    <property type="resolution" value="14.00 A"/>
    <property type="chains" value="k=1-55"/>
</dbReference>
<dbReference type="PDB" id="6VYU">
    <property type="method" value="EM"/>
    <property type="resolution" value="7.00 A"/>
    <property type="chains" value="k=1-55"/>
</dbReference>
<dbReference type="PDB" id="6VYW">
    <property type="method" value="EM"/>
    <property type="resolution" value="7.00 A"/>
    <property type="chains" value="k=1-55"/>
</dbReference>
<dbReference type="PDB" id="6VYX">
    <property type="method" value="EM"/>
    <property type="resolution" value="9.90 A"/>
    <property type="chains" value="k=1-55"/>
</dbReference>
<dbReference type="PDB" id="6VYY">
    <property type="method" value="EM"/>
    <property type="resolution" value="9.90 A"/>
    <property type="chains" value="k=1-55"/>
</dbReference>
<dbReference type="PDB" id="6VYZ">
    <property type="method" value="EM"/>
    <property type="resolution" value="9.90 A"/>
    <property type="chains" value="k=1-55"/>
</dbReference>
<dbReference type="PDB" id="6VZ2">
    <property type="method" value="EM"/>
    <property type="resolution" value="10.00 A"/>
    <property type="chains" value="k=1-55"/>
</dbReference>
<dbReference type="PDB" id="6VZ3">
    <property type="method" value="EM"/>
    <property type="resolution" value="8.90 A"/>
    <property type="chains" value="k=4-55"/>
</dbReference>
<dbReference type="PDB" id="6VZ5">
    <property type="method" value="EM"/>
    <property type="resolution" value="8.90 A"/>
    <property type="chains" value="k=1-55"/>
</dbReference>
<dbReference type="PDB" id="6VZ7">
    <property type="method" value="EM"/>
    <property type="resolution" value="7.00 A"/>
    <property type="chains" value="k=4-55"/>
</dbReference>
<dbReference type="PDB" id="6VZJ">
    <property type="method" value="EM"/>
    <property type="resolution" value="4.10 A"/>
    <property type="chains" value="k=1-55"/>
</dbReference>
<dbReference type="PDB" id="6WD0">
    <property type="method" value="EM"/>
    <property type="resolution" value="3.00 A"/>
    <property type="chains" value="C=4-53"/>
</dbReference>
<dbReference type="PDB" id="6WD1">
    <property type="method" value="EM"/>
    <property type="resolution" value="3.30 A"/>
    <property type="chains" value="C=4-53"/>
</dbReference>
<dbReference type="PDB" id="6WD2">
    <property type="method" value="EM"/>
    <property type="resolution" value="3.60 A"/>
    <property type="chains" value="C=4-53"/>
</dbReference>
<dbReference type="PDB" id="6WD3">
    <property type="method" value="EM"/>
    <property type="resolution" value="3.60 A"/>
    <property type="chains" value="C=4-53"/>
</dbReference>
<dbReference type="PDB" id="6WD4">
    <property type="method" value="EM"/>
    <property type="resolution" value="3.70 A"/>
    <property type="chains" value="C=4-53"/>
</dbReference>
<dbReference type="PDB" id="6WD5">
    <property type="method" value="EM"/>
    <property type="resolution" value="3.60 A"/>
    <property type="chains" value="C=4-53"/>
</dbReference>
<dbReference type="PDB" id="6WD6">
    <property type="method" value="EM"/>
    <property type="resolution" value="3.70 A"/>
    <property type="chains" value="C=4-53"/>
</dbReference>
<dbReference type="PDB" id="6WD7">
    <property type="method" value="EM"/>
    <property type="resolution" value="3.90 A"/>
    <property type="chains" value="C=4-53"/>
</dbReference>
<dbReference type="PDB" id="6WD8">
    <property type="method" value="EM"/>
    <property type="resolution" value="3.70 A"/>
    <property type="chains" value="C=4-53"/>
</dbReference>
<dbReference type="PDB" id="6WD9">
    <property type="method" value="EM"/>
    <property type="resolution" value="3.70 A"/>
    <property type="chains" value="C=4-53"/>
</dbReference>
<dbReference type="PDB" id="6WDA">
    <property type="method" value="EM"/>
    <property type="resolution" value="3.80 A"/>
    <property type="chains" value="C=4-53"/>
</dbReference>
<dbReference type="PDB" id="6WDB">
    <property type="method" value="EM"/>
    <property type="resolution" value="4.00 A"/>
    <property type="chains" value="C=4-53"/>
</dbReference>
<dbReference type="PDB" id="6WDC">
    <property type="method" value="EM"/>
    <property type="resolution" value="4.20 A"/>
    <property type="chains" value="C=4-53"/>
</dbReference>
<dbReference type="PDB" id="6WDD">
    <property type="method" value="EM"/>
    <property type="resolution" value="3.20 A"/>
    <property type="chains" value="C=4-53"/>
</dbReference>
<dbReference type="PDB" id="6WDE">
    <property type="method" value="EM"/>
    <property type="resolution" value="3.00 A"/>
    <property type="chains" value="C=4-53"/>
</dbReference>
<dbReference type="PDB" id="6WDF">
    <property type="method" value="EM"/>
    <property type="resolution" value="3.30 A"/>
    <property type="chains" value="C=4-53"/>
</dbReference>
<dbReference type="PDB" id="6WDG">
    <property type="method" value="EM"/>
    <property type="resolution" value="3.30 A"/>
    <property type="chains" value="C=4-53"/>
</dbReference>
<dbReference type="PDB" id="6WDH">
    <property type="method" value="EM"/>
    <property type="resolution" value="4.30 A"/>
    <property type="chains" value="C=4-53"/>
</dbReference>
<dbReference type="PDB" id="6WDI">
    <property type="method" value="EM"/>
    <property type="resolution" value="4.00 A"/>
    <property type="chains" value="C=4-53"/>
</dbReference>
<dbReference type="PDB" id="6WDJ">
    <property type="method" value="EM"/>
    <property type="resolution" value="3.70 A"/>
    <property type="chains" value="C=4-53"/>
</dbReference>
<dbReference type="PDB" id="6WDK">
    <property type="method" value="EM"/>
    <property type="resolution" value="3.60 A"/>
    <property type="chains" value="C=4-53"/>
</dbReference>
<dbReference type="PDB" id="6WDL">
    <property type="method" value="EM"/>
    <property type="resolution" value="3.70 A"/>
    <property type="chains" value="C=4-53"/>
</dbReference>
<dbReference type="PDB" id="6WDM">
    <property type="method" value="EM"/>
    <property type="resolution" value="3.60 A"/>
    <property type="chains" value="C=4-53"/>
</dbReference>
<dbReference type="PDB" id="6WNW">
    <property type="method" value="EM"/>
    <property type="resolution" value="3.20 A"/>
    <property type="chains" value="C=4-53"/>
</dbReference>
<dbReference type="PDB" id="6X6T">
    <property type="method" value="EM"/>
    <property type="resolution" value="3.20 A"/>
    <property type="chains" value="k=1-55"/>
</dbReference>
<dbReference type="PDB" id="6X7F">
    <property type="method" value="EM"/>
    <property type="resolution" value="3.50 A"/>
    <property type="chains" value="k=1-55"/>
</dbReference>
<dbReference type="PDB" id="6X7K">
    <property type="method" value="EM"/>
    <property type="resolution" value="3.10 A"/>
    <property type="chains" value="k=1-55"/>
</dbReference>
<dbReference type="PDB" id="6X9Q">
    <property type="method" value="EM"/>
    <property type="resolution" value="4.80 A"/>
    <property type="chains" value="k=1-55"/>
</dbReference>
<dbReference type="PDB" id="6XDQ">
    <property type="method" value="EM"/>
    <property type="resolution" value="3.70 A"/>
    <property type="chains" value="k=1-55"/>
</dbReference>
<dbReference type="PDB" id="6XDR">
    <property type="method" value="EM"/>
    <property type="resolution" value="4.70 A"/>
    <property type="chains" value="k=1-55"/>
</dbReference>
<dbReference type="PDB" id="6XGF">
    <property type="method" value="EM"/>
    <property type="resolution" value="5.00 A"/>
    <property type="chains" value="k=1-55"/>
</dbReference>
<dbReference type="PDB" id="6XII">
    <property type="method" value="EM"/>
    <property type="resolution" value="7.00 A"/>
    <property type="chains" value="k=1-55"/>
</dbReference>
<dbReference type="PDB" id="6XIJ">
    <property type="method" value="EM"/>
    <property type="resolution" value="8.00 A"/>
    <property type="chains" value="k=1-55"/>
</dbReference>
<dbReference type="PDB" id="6XZ7">
    <property type="method" value="EM"/>
    <property type="resolution" value="2.10 A"/>
    <property type="chains" value="b=4-54"/>
</dbReference>
<dbReference type="PDB" id="6XZA">
    <property type="method" value="EM"/>
    <property type="resolution" value="2.66 A"/>
    <property type="chains" value="b2=4-54"/>
</dbReference>
<dbReference type="PDB" id="6XZB">
    <property type="method" value="EM"/>
    <property type="resolution" value="2.54 A"/>
    <property type="chains" value="b2=4-54"/>
</dbReference>
<dbReference type="PDB" id="6Y69">
    <property type="method" value="EM"/>
    <property type="resolution" value="2.86 A"/>
    <property type="chains" value="1=4-53"/>
</dbReference>
<dbReference type="PDB" id="6YS3">
    <property type="method" value="EM"/>
    <property type="resolution" value="2.58 A"/>
    <property type="chains" value="4=1-55"/>
</dbReference>
<dbReference type="PDB" id="6YSR">
    <property type="method" value="EM"/>
    <property type="resolution" value="3.10 A"/>
    <property type="chains" value="1=1-55"/>
</dbReference>
<dbReference type="PDB" id="6YSS">
    <property type="method" value="EM"/>
    <property type="resolution" value="2.60 A"/>
    <property type="chains" value="1=1-55"/>
</dbReference>
<dbReference type="PDB" id="6YST">
    <property type="method" value="EM"/>
    <property type="resolution" value="3.20 A"/>
    <property type="chains" value="1=1-55"/>
</dbReference>
<dbReference type="PDB" id="6YSU">
    <property type="method" value="EM"/>
    <property type="resolution" value="3.70 A"/>
    <property type="chains" value="1=1-55"/>
</dbReference>
<dbReference type="PDB" id="6ZTJ">
    <property type="method" value="EM"/>
    <property type="resolution" value="3.40 A"/>
    <property type="chains" value="B3=1-55"/>
</dbReference>
<dbReference type="PDB" id="6ZTL">
    <property type="method" value="EM"/>
    <property type="resolution" value="3.50 A"/>
    <property type="chains" value="B3=1-55"/>
</dbReference>
<dbReference type="PDB" id="6ZTM">
    <property type="method" value="EM"/>
    <property type="resolution" value="3.30 A"/>
    <property type="chains" value="B3=1-55"/>
</dbReference>
<dbReference type="PDB" id="6ZTN">
    <property type="method" value="EM"/>
    <property type="resolution" value="3.90 A"/>
    <property type="chains" value="B3=1-55"/>
</dbReference>
<dbReference type="PDB" id="6ZTO">
    <property type="method" value="EM"/>
    <property type="resolution" value="3.00 A"/>
    <property type="chains" value="B3=1-55"/>
</dbReference>
<dbReference type="PDB" id="6ZTP">
    <property type="method" value="EM"/>
    <property type="resolution" value="3.00 A"/>
    <property type="chains" value="B3=1-55"/>
</dbReference>
<dbReference type="PDB" id="6ZU1">
    <property type="method" value="EM"/>
    <property type="resolution" value="3.00 A"/>
    <property type="chains" value="B3=1-55"/>
</dbReference>
<dbReference type="PDB" id="7ABZ">
    <property type="method" value="EM"/>
    <property type="resolution" value="3.21 A"/>
    <property type="chains" value="c=4-53"/>
</dbReference>
<dbReference type="PDB" id="7AC7">
    <property type="method" value="EM"/>
    <property type="resolution" value="3.08 A"/>
    <property type="chains" value="c=4-55"/>
</dbReference>
<dbReference type="PDB" id="7ACJ">
    <property type="method" value="EM"/>
    <property type="resolution" value="3.20 A"/>
    <property type="chains" value="c=4-55"/>
</dbReference>
<dbReference type="PDB" id="7ACR">
    <property type="method" value="EM"/>
    <property type="resolution" value="3.44 A"/>
    <property type="chains" value="c=4-55"/>
</dbReference>
<dbReference type="PDB" id="7B5K">
    <property type="method" value="EM"/>
    <property type="resolution" value="2.90 A"/>
    <property type="chains" value="1=4-54"/>
</dbReference>
<dbReference type="PDB" id="7BL2">
    <property type="method" value="EM"/>
    <property type="resolution" value="3.70 A"/>
    <property type="chains" value="1=1-55"/>
</dbReference>
<dbReference type="PDB" id="7BL3">
    <property type="method" value="EM"/>
    <property type="resolution" value="3.50 A"/>
    <property type="chains" value="1=1-55"/>
</dbReference>
<dbReference type="PDB" id="7BL4">
    <property type="method" value="EM"/>
    <property type="resolution" value="2.40 A"/>
    <property type="chains" value="1=1-55"/>
</dbReference>
<dbReference type="PDB" id="7BL5">
    <property type="method" value="EM"/>
    <property type="resolution" value="3.30 A"/>
    <property type="chains" value="1=1-55"/>
</dbReference>
<dbReference type="PDB" id="7BL6">
    <property type="method" value="EM"/>
    <property type="resolution" value="4.00 A"/>
    <property type="chains" value="1=1-55"/>
</dbReference>
<dbReference type="PDB" id="7BV8">
    <property type="method" value="EM"/>
    <property type="resolution" value="3.14 A"/>
    <property type="chains" value="c=1-55"/>
</dbReference>
<dbReference type="PDB" id="7D6Z">
    <property type="method" value="EM"/>
    <property type="resolution" value="3.40 A"/>
    <property type="chains" value="b=1-55"/>
</dbReference>
<dbReference type="PDB" id="7D80">
    <property type="method" value="EM"/>
    <property type="resolution" value="4.10 A"/>
    <property type="chains" value="z=1-55"/>
</dbReference>
<dbReference type="PDB" id="7JSS">
    <property type="method" value="EM"/>
    <property type="resolution" value="3.70 A"/>
    <property type="chains" value="C=4-53"/>
</dbReference>
<dbReference type="PDB" id="7JSW">
    <property type="method" value="EM"/>
    <property type="resolution" value="3.80 A"/>
    <property type="chains" value="C=4-53"/>
</dbReference>
<dbReference type="PDB" id="7JSZ">
    <property type="method" value="EM"/>
    <property type="resolution" value="3.70 A"/>
    <property type="chains" value="C=4-53"/>
</dbReference>
<dbReference type="PDB" id="7JT1">
    <property type="method" value="EM"/>
    <property type="resolution" value="3.30 A"/>
    <property type="chains" value="C=4-53"/>
</dbReference>
<dbReference type="PDB" id="7JT2">
    <property type="method" value="EM"/>
    <property type="resolution" value="3.50 A"/>
    <property type="chains" value="C=4-53"/>
</dbReference>
<dbReference type="PDB" id="7JT3">
    <property type="method" value="EM"/>
    <property type="resolution" value="3.70 A"/>
    <property type="chains" value="C=4-53"/>
</dbReference>
<dbReference type="PDB" id="7K00">
    <property type="method" value="EM"/>
    <property type="resolution" value="1.98 A"/>
    <property type="chains" value="0=1-55"/>
</dbReference>
<dbReference type="PDB" id="7K50">
    <property type="method" value="EM"/>
    <property type="resolution" value="3.40 A"/>
    <property type="chains" value="C=4-53"/>
</dbReference>
<dbReference type="PDB" id="7K51">
    <property type="method" value="EM"/>
    <property type="resolution" value="3.50 A"/>
    <property type="chains" value="C=4-53"/>
</dbReference>
<dbReference type="PDB" id="7K52">
    <property type="method" value="EM"/>
    <property type="resolution" value="3.40 A"/>
    <property type="chains" value="C=4-53"/>
</dbReference>
<dbReference type="PDB" id="7K53">
    <property type="method" value="EM"/>
    <property type="resolution" value="3.20 A"/>
    <property type="chains" value="C=4-53"/>
</dbReference>
<dbReference type="PDB" id="7K54">
    <property type="method" value="EM"/>
    <property type="resolution" value="3.20 A"/>
    <property type="chains" value="C=4-53"/>
</dbReference>
<dbReference type="PDB" id="7K55">
    <property type="method" value="EM"/>
    <property type="resolution" value="3.30 A"/>
    <property type="chains" value="C=4-53"/>
</dbReference>
<dbReference type="PDB" id="7LV0">
    <property type="method" value="EM"/>
    <property type="resolution" value="3.20 A"/>
    <property type="chains" value="C=4-53"/>
</dbReference>
<dbReference type="PDB" id="7LVK">
    <property type="method" value="EM"/>
    <property type="resolution" value="2.20 A"/>
    <property type="chains" value="j=1-55"/>
</dbReference>
<dbReference type="PDB" id="7M5D">
    <property type="method" value="EM"/>
    <property type="resolution" value="2.80 A"/>
    <property type="chains" value="c=4-55"/>
</dbReference>
<dbReference type="PDB" id="7N1P">
    <property type="method" value="EM"/>
    <property type="resolution" value="2.33 A"/>
    <property type="chains" value="Lg=1-55"/>
</dbReference>
<dbReference type="PDB" id="7N2C">
    <property type="method" value="EM"/>
    <property type="resolution" value="2.72 A"/>
    <property type="chains" value="Lg=1-55"/>
</dbReference>
<dbReference type="PDB" id="7N2U">
    <property type="method" value="EM"/>
    <property type="resolution" value="2.53 A"/>
    <property type="chains" value="Lg=1-55"/>
</dbReference>
<dbReference type="PDB" id="7N2V">
    <property type="method" value="EM"/>
    <property type="resolution" value="2.54 A"/>
    <property type="chains" value="Lg=1-55"/>
</dbReference>
<dbReference type="PDB" id="7N30">
    <property type="method" value="EM"/>
    <property type="resolution" value="2.66 A"/>
    <property type="chains" value="Lg=1-55"/>
</dbReference>
<dbReference type="PDB" id="7N31">
    <property type="method" value="EM"/>
    <property type="resolution" value="2.69 A"/>
    <property type="chains" value="Lg=1-55"/>
</dbReference>
<dbReference type="PDB" id="7NBU">
    <property type="method" value="EM"/>
    <property type="resolution" value="3.11 A"/>
    <property type="chains" value="0=4-54"/>
</dbReference>
<dbReference type="PDB" id="7NWT">
    <property type="method" value="EM"/>
    <property type="resolution" value="2.66 A"/>
    <property type="chains" value="c=1-55"/>
</dbReference>
<dbReference type="PDB" id="7O19">
    <property type="method" value="EM"/>
    <property type="resolution" value="2.90 A"/>
    <property type="chains" value="B1=1-55"/>
</dbReference>
<dbReference type="PDB" id="7O1A">
    <property type="method" value="EM"/>
    <property type="resolution" value="2.40 A"/>
    <property type="chains" value="B1=1-55"/>
</dbReference>
<dbReference type="PDB" id="7O1C">
    <property type="method" value="EM"/>
    <property type="resolution" value="2.60 A"/>
    <property type="chains" value="B1=1-55"/>
</dbReference>
<dbReference type="PDB" id="7OIZ">
    <property type="method" value="EM"/>
    <property type="resolution" value="2.90 A"/>
    <property type="chains" value="0=1-55"/>
</dbReference>
<dbReference type="PDB" id="7OJ0">
    <property type="method" value="EM"/>
    <property type="resolution" value="3.50 A"/>
    <property type="chains" value="0=1-55"/>
</dbReference>
<dbReference type="PDB" id="7P3K">
    <property type="method" value="EM"/>
    <property type="resolution" value="2.90 A"/>
    <property type="chains" value="0=1-55"/>
</dbReference>
<dbReference type="PDB" id="7PJS">
    <property type="method" value="EM"/>
    <property type="resolution" value="2.35 A"/>
    <property type="chains" value="1=1-55"/>
</dbReference>
<dbReference type="PDB" id="7PJT">
    <property type="method" value="EM"/>
    <property type="resolution" value="6.00 A"/>
    <property type="chains" value="1=1-55"/>
</dbReference>
<dbReference type="PDB" id="7PJU">
    <property type="method" value="EM"/>
    <property type="resolution" value="9.50 A"/>
    <property type="chains" value="1=1-55"/>
</dbReference>
<dbReference type="PDB" id="7PJV">
    <property type="method" value="EM"/>
    <property type="resolution" value="3.10 A"/>
    <property type="chains" value="1=1-55"/>
</dbReference>
<dbReference type="PDB" id="7PJW">
    <property type="method" value="EM"/>
    <property type="resolution" value="4.00 A"/>
    <property type="chains" value="1=1-55"/>
</dbReference>
<dbReference type="PDB" id="7PJX">
    <property type="method" value="EM"/>
    <property type="resolution" value="6.50 A"/>
    <property type="chains" value="1=1-55"/>
</dbReference>
<dbReference type="PDB" id="7PJY">
    <property type="method" value="EM"/>
    <property type="resolution" value="3.10 A"/>
    <property type="chains" value="1=1-55"/>
</dbReference>
<dbReference type="PDB" id="7PJZ">
    <property type="method" value="EM"/>
    <property type="resolution" value="6.00 A"/>
    <property type="chains" value="1=1-55"/>
</dbReference>
<dbReference type="PDB" id="7Q4K">
    <property type="method" value="EM"/>
    <property type="resolution" value="3.00 A"/>
    <property type="chains" value="B1=1-55"/>
</dbReference>
<dbReference type="PDB" id="7QG8">
    <property type="method" value="EM"/>
    <property type="resolution" value="3.97 A"/>
    <property type="chains" value="o=1-55"/>
</dbReference>
<dbReference type="PDB" id="7QGH">
    <property type="method" value="EM"/>
    <property type="resolution" value="4.48 A"/>
    <property type="chains" value="o=1-55"/>
</dbReference>
<dbReference type="PDB" id="7QGN">
    <property type="method" value="EM"/>
    <property type="resolution" value="3.37 A"/>
    <property type="chains" value="o=1-55"/>
</dbReference>
<dbReference type="PDB" id="7QGR">
    <property type="method" value="EM"/>
    <property type="resolution" value="5.70 A"/>
    <property type="chains" value="o=1-55"/>
</dbReference>
<dbReference type="PDB" id="7QQ3">
    <property type="method" value="EM"/>
    <property type="resolution" value="2.10 A"/>
    <property type="chains" value="j=1-55"/>
</dbReference>
<dbReference type="PDB" id="7S1G">
    <property type="method" value="EM"/>
    <property type="resolution" value="2.48 A"/>
    <property type="chains" value="j=1-55"/>
</dbReference>
<dbReference type="PDB" id="7S1H">
    <property type="method" value="EM"/>
    <property type="resolution" value="2.35 A"/>
    <property type="chains" value="j=1-55"/>
</dbReference>
<dbReference type="PDB" id="7S1I">
    <property type="method" value="EM"/>
    <property type="resolution" value="2.48 A"/>
    <property type="chains" value="j=1-55"/>
</dbReference>
<dbReference type="PDB" id="7S1J">
    <property type="method" value="EM"/>
    <property type="resolution" value="2.47 A"/>
    <property type="chains" value="j=1-55"/>
</dbReference>
<dbReference type="PDB" id="7S1K">
    <property type="method" value="EM"/>
    <property type="resolution" value="2.42 A"/>
    <property type="chains" value="j=1-55"/>
</dbReference>
<dbReference type="PDB" id="7SA4">
    <property type="method" value="EM"/>
    <property type="resolution" value="2.55 A"/>
    <property type="chains" value="c=1-55"/>
</dbReference>
<dbReference type="PDB" id="7SS9">
    <property type="method" value="EM"/>
    <property type="resolution" value="3.90 A"/>
    <property type="chains" value="C=4-53"/>
</dbReference>
<dbReference type="PDB" id="7SSD">
    <property type="method" value="EM"/>
    <property type="resolution" value="3.30 A"/>
    <property type="chains" value="C=4-53"/>
</dbReference>
<dbReference type="PDB" id="7SSL">
    <property type="method" value="EM"/>
    <property type="resolution" value="3.80 A"/>
    <property type="chains" value="C=4-53"/>
</dbReference>
<dbReference type="PDB" id="7SSN">
    <property type="method" value="EM"/>
    <property type="resolution" value="3.20 A"/>
    <property type="chains" value="C=4-53"/>
</dbReference>
<dbReference type="PDB" id="7SSO">
    <property type="method" value="EM"/>
    <property type="resolution" value="3.20 A"/>
    <property type="chains" value="C=4-53"/>
</dbReference>
<dbReference type="PDB" id="7SSW">
    <property type="method" value="EM"/>
    <property type="resolution" value="3.80 A"/>
    <property type="chains" value="C=4-53"/>
</dbReference>
<dbReference type="PDB" id="7ST2">
    <property type="method" value="EM"/>
    <property type="resolution" value="2.90 A"/>
    <property type="chains" value="C=4-53"/>
</dbReference>
<dbReference type="PDB" id="7ST6">
    <property type="method" value="EM"/>
    <property type="resolution" value="3.00 A"/>
    <property type="chains" value="C=4-53"/>
</dbReference>
<dbReference type="PDB" id="7ST7">
    <property type="method" value="EM"/>
    <property type="resolution" value="3.20 A"/>
    <property type="chains" value="C=4-53"/>
</dbReference>
<dbReference type="PDB" id="7TOS">
    <property type="method" value="EM"/>
    <property type="resolution" value="2.90 A"/>
    <property type="chains" value="L33=4-53"/>
</dbReference>
<dbReference type="PDB" id="7UG7">
    <property type="method" value="EM"/>
    <property type="resolution" value="2.58 A"/>
    <property type="chains" value="Lg=1-55"/>
</dbReference>
<dbReference type="PDB" id="7UPH">
    <property type="method" value="EM"/>
    <property type="resolution" value="4.18 A"/>
    <property type="chains" value="j=4-53"/>
</dbReference>
<dbReference type="PDB" id="7Y7C">
    <property type="method" value="EM"/>
    <property type="resolution" value="2.51 A"/>
    <property type="chains" value="0=1-55"/>
</dbReference>
<dbReference type="PDB" id="7Y7D">
    <property type="method" value="EM"/>
    <property type="resolution" value="2.58 A"/>
    <property type="chains" value="0=1-55"/>
</dbReference>
<dbReference type="PDB" id="7Y7E">
    <property type="method" value="EM"/>
    <property type="resolution" value="2.41 A"/>
    <property type="chains" value="0=1-55"/>
</dbReference>
<dbReference type="PDB" id="7Y7F">
    <property type="method" value="EM"/>
    <property type="resolution" value="2.43 A"/>
    <property type="chains" value="0=1-55"/>
</dbReference>
<dbReference type="PDB" id="7Y7G">
    <property type="method" value="EM"/>
    <property type="resolution" value="2.34 A"/>
    <property type="chains" value="0=1-55"/>
</dbReference>
<dbReference type="PDB" id="7Y7H">
    <property type="method" value="EM"/>
    <property type="resolution" value="2.51 A"/>
    <property type="chains" value="0=1-55"/>
</dbReference>
<dbReference type="PDB" id="7YLA">
    <property type="method" value="EM"/>
    <property type="resolution" value="2.52 A"/>
    <property type="chains" value="j=4-53"/>
</dbReference>
<dbReference type="PDB" id="7Z20">
    <property type="method" value="EM"/>
    <property type="resolution" value="2.29 A"/>
    <property type="chains" value="4=1-55"/>
</dbReference>
<dbReference type="PDB" id="7ZOD">
    <property type="method" value="EM"/>
    <property type="resolution" value="2.56 A"/>
    <property type="chains" value="4=1-55"/>
</dbReference>
<dbReference type="PDB" id="7ZP8">
    <property type="method" value="EM"/>
    <property type="resolution" value="2.20 A"/>
    <property type="chains" value="4=1-55"/>
</dbReference>
<dbReference type="PDB" id="7ZQ5">
    <property type="method" value="EM"/>
    <property type="resolution" value="2.70 A"/>
    <property type="chains" value="4=1-55"/>
</dbReference>
<dbReference type="PDB" id="7ZQ6">
    <property type="method" value="EM"/>
    <property type="resolution" value="2.75 A"/>
    <property type="chains" value="4=1-55"/>
</dbReference>
<dbReference type="PDB" id="7ZTA">
    <property type="method" value="EM"/>
    <property type="resolution" value="2.70 A"/>
    <property type="chains" value="L331=4-54"/>
</dbReference>
<dbReference type="PDB" id="8A3L">
    <property type="method" value="EM"/>
    <property type="resolution" value="3.42 A"/>
    <property type="chains" value="0=1-55"/>
</dbReference>
<dbReference type="PDB" id="8AKN">
    <property type="method" value="EM"/>
    <property type="resolution" value="2.30 A"/>
    <property type="chains" value="0=1-55"/>
</dbReference>
<dbReference type="PDB" id="8AM9">
    <property type="method" value="EM"/>
    <property type="resolution" value="2.80 A"/>
    <property type="chains" value="0=1-55"/>
</dbReference>
<dbReference type="PDB" id="8ANA">
    <property type="method" value="EM"/>
    <property type="resolution" value="2.10 A"/>
    <property type="chains" value="0=1-55"/>
</dbReference>
<dbReference type="PDB" id="8AP4">
    <property type="method" value="EM"/>
    <property type="resolution" value="3.00 A"/>
    <property type="chains" value="0=1-55"/>
</dbReference>
<dbReference type="PDB" id="8AYE">
    <property type="method" value="EM"/>
    <property type="resolution" value="1.96 A"/>
    <property type="chains" value="0=1-55"/>
</dbReference>
<dbReference type="PDB" id="8B0X">
    <property type="method" value="EM"/>
    <property type="resolution" value="1.55 A"/>
    <property type="chains" value="0=1-55"/>
</dbReference>
<dbReference type="PDB" id="8B7Y">
    <property type="method" value="EM"/>
    <property type="resolution" value="3.00 A"/>
    <property type="chains" value="j=1-55"/>
</dbReference>
<dbReference type="PDB" id="8BF7">
    <property type="method" value="EM"/>
    <property type="resolution" value="2.33 A"/>
    <property type="chains" value="b=1-55"/>
</dbReference>
<dbReference type="PDB" id="8BGE">
    <property type="method" value="EM"/>
    <property type="resolution" value="2.11 A"/>
    <property type="chains" value="b=1-55"/>
</dbReference>
<dbReference type="PDB" id="8BGH">
    <property type="method" value="EM"/>
    <property type="resolution" value="2.88 A"/>
    <property type="chains" value="b=1-55"/>
</dbReference>
<dbReference type="PDB" id="8BH4">
    <property type="method" value="EM"/>
    <property type="resolution" value="2.62 A"/>
    <property type="chains" value="b=1-55"/>
</dbReference>
<dbReference type="PDB" id="8BHJ">
    <property type="method" value="EM"/>
    <property type="resolution" value="2.81 A"/>
    <property type="chains" value="b=1-55"/>
</dbReference>
<dbReference type="PDB" id="8BHL">
    <property type="method" value="EM"/>
    <property type="resolution" value="2.21 A"/>
    <property type="chains" value="b=1-55"/>
</dbReference>
<dbReference type="PDB" id="8BHN">
    <property type="method" value="EM"/>
    <property type="resolution" value="2.85 A"/>
    <property type="chains" value="b=1-55"/>
</dbReference>
<dbReference type="PDB" id="8BHP">
    <property type="method" value="EM"/>
    <property type="resolution" value="2.37 A"/>
    <property type="chains" value="b=1-55"/>
</dbReference>
<dbReference type="PDB" id="8BIL">
    <property type="method" value="EM"/>
    <property type="resolution" value="2.04 A"/>
    <property type="chains" value="b=1-55"/>
</dbReference>
<dbReference type="PDB" id="8BIM">
    <property type="method" value="EM"/>
    <property type="resolution" value="2.04 A"/>
    <property type="chains" value="b=1-55"/>
</dbReference>
<dbReference type="PDB" id="8C8X">
    <property type="method" value="EM"/>
    <property type="resolution" value="3.93 A"/>
    <property type="chains" value="1=1-55"/>
</dbReference>
<dbReference type="PDB" id="8CAM">
    <property type="method" value="EM"/>
    <property type="resolution" value="1.86 A"/>
    <property type="chains" value="0=1-55"/>
</dbReference>
<dbReference type="PDB" id="8CEU">
    <property type="method" value="EM"/>
    <property type="resolution" value="1.83 A"/>
    <property type="chains" value="0=1-55"/>
</dbReference>
<dbReference type="PDB" id="8CGD">
    <property type="method" value="EM"/>
    <property type="resolution" value="1.98 A"/>
    <property type="chains" value="0=1-55"/>
</dbReference>
<dbReference type="PDB" id="8CGK">
    <property type="method" value="EM"/>
    <property type="resolution" value="1.64 A"/>
    <property type="chains" value="0=1-55"/>
</dbReference>
<dbReference type="PDB" id="8CGV">
    <property type="method" value="EM"/>
    <property type="resolution" value="1.66 A"/>
    <property type="chains" value="0=1-55"/>
</dbReference>
<dbReference type="PDB" id="8EIU">
    <property type="method" value="EM"/>
    <property type="resolution" value="2.24 A"/>
    <property type="chains" value="0=1-55"/>
</dbReference>
<dbReference type="PDB" id="8EKC">
    <property type="method" value="EM"/>
    <property type="resolution" value="2.70 A"/>
    <property type="chains" value="5=1-55"/>
</dbReference>
<dbReference type="PDB" id="8EMM">
    <property type="method" value="EM"/>
    <property type="resolution" value="2.10 A"/>
    <property type="chains" value="0=1-55"/>
</dbReference>
<dbReference type="PDB" id="8FIZ">
    <property type="method" value="EM"/>
    <property type="resolution" value="3.80 A"/>
    <property type="chains" value="BI=1-55"/>
</dbReference>
<dbReference type="PDB" id="8FTO">
    <property type="method" value="EM"/>
    <property type="resolution" value="1.85 A"/>
    <property type="chains" value="0=1-55"/>
</dbReference>
<dbReference type="PDB" id="8FZD">
    <property type="method" value="EM"/>
    <property type="resolution" value="3.10 A"/>
    <property type="chains" value="5=1-55"/>
</dbReference>
<dbReference type="PDB" id="8FZE">
    <property type="method" value="EM"/>
    <property type="resolution" value="3.00 A"/>
    <property type="chains" value="5=1-55"/>
</dbReference>
<dbReference type="PDB" id="8FZF">
    <property type="method" value="EM"/>
    <property type="resolution" value="3.20 A"/>
    <property type="chains" value="5=1-55"/>
</dbReference>
<dbReference type="PDB" id="8FZG">
    <property type="method" value="EM"/>
    <property type="resolution" value="3.10 A"/>
    <property type="chains" value="5=1-55"/>
</dbReference>
<dbReference type="PDB" id="8FZH">
    <property type="method" value="EM"/>
    <property type="resolution" value="2.90 A"/>
    <property type="chains" value="5=1-55"/>
</dbReference>
<dbReference type="PDB" id="8FZI">
    <property type="method" value="EM"/>
    <property type="resolution" value="3.10 A"/>
    <property type="chains" value="5=1-55"/>
</dbReference>
<dbReference type="PDB" id="8FZJ">
    <property type="method" value="EM"/>
    <property type="resolution" value="3.00 A"/>
    <property type="chains" value="5=1-55"/>
</dbReference>
<dbReference type="PDB" id="8G2U">
    <property type="method" value="EM"/>
    <property type="resolution" value="3.00 A"/>
    <property type="chains" value="1=4-54"/>
</dbReference>
<dbReference type="PDB" id="8G31">
    <property type="method" value="EM"/>
    <property type="resolution" value="3.20 A"/>
    <property type="chains" value="1=4-54"/>
</dbReference>
<dbReference type="PDB" id="8G34">
    <property type="method" value="EM"/>
    <property type="resolution" value="3.20 A"/>
    <property type="chains" value="1=4-54"/>
</dbReference>
<dbReference type="PDB" id="8G38">
    <property type="method" value="EM"/>
    <property type="resolution" value="3.20 A"/>
    <property type="chains" value="1=4-54"/>
</dbReference>
<dbReference type="PDB" id="8G6W">
    <property type="method" value="EM"/>
    <property type="resolution" value="2.02 A"/>
    <property type="chains" value="0=1-55"/>
</dbReference>
<dbReference type="PDB" id="8G6X">
    <property type="method" value="EM"/>
    <property type="resolution" value="2.31 A"/>
    <property type="chains" value="0=1-55"/>
</dbReference>
<dbReference type="PDB" id="8G6Y">
    <property type="method" value="EM"/>
    <property type="resolution" value="2.09 A"/>
    <property type="chains" value="0=1-55"/>
</dbReference>
<dbReference type="PDB" id="8G7P">
    <property type="method" value="EM"/>
    <property type="resolution" value="2.90 A"/>
    <property type="chains" value="5=1-55"/>
</dbReference>
<dbReference type="PDB" id="8G7Q">
    <property type="method" value="EM"/>
    <property type="resolution" value="3.10 A"/>
    <property type="chains" value="5=1-55"/>
</dbReference>
<dbReference type="PDB" id="8G7R">
    <property type="method" value="EM"/>
    <property type="resolution" value="2.80 A"/>
    <property type="chains" value="5=1-55"/>
</dbReference>
<dbReference type="PDB" id="8G7S">
    <property type="method" value="EM"/>
    <property type="resolution" value="3.10 A"/>
    <property type="chains" value="5=1-55"/>
</dbReference>
<dbReference type="PDB" id="8HSP">
    <property type="method" value="EM"/>
    <property type="resolution" value="2.32 A"/>
    <property type="chains" value="0=1-55"/>
</dbReference>
<dbReference type="PDB" id="8HTZ">
    <property type="method" value="EM"/>
    <property type="resolution" value="2.40 A"/>
    <property type="chains" value="0=1-55"/>
</dbReference>
<dbReference type="PDB" id="8HU1">
    <property type="method" value="EM"/>
    <property type="resolution" value="2.69 A"/>
    <property type="chains" value="0=1-55"/>
</dbReference>
<dbReference type="PDB" id="8IFB">
    <property type="method" value="EM"/>
    <property type="resolution" value="2.43 A"/>
    <property type="chains" value="0=1-55"/>
</dbReference>
<dbReference type="PDB" id="8IFC">
    <property type="method" value="EM"/>
    <property type="resolution" value="2.90 A"/>
    <property type="chains" value="0=1-55"/>
</dbReference>
<dbReference type="PDB" id="8J1Z">
    <property type="method" value="EM"/>
    <property type="resolution" value="2.60 A"/>
    <property type="chains" value="0=1-55"/>
</dbReference>
<dbReference type="PDB" id="8P16">
    <property type="method" value="EM"/>
    <property type="resolution" value="2.77 A"/>
    <property type="chains" value="c=1-55"/>
</dbReference>
<dbReference type="PDB" id="8P17">
    <property type="method" value="EM"/>
    <property type="resolution" value="2.78 A"/>
    <property type="chains" value="c=1-55"/>
</dbReference>
<dbReference type="PDB" id="8P18">
    <property type="method" value="EM"/>
    <property type="resolution" value="2.77 A"/>
    <property type="chains" value="c=1-55"/>
</dbReference>
<dbReference type="PDB" id="8PEG">
    <property type="method" value="EM"/>
    <property type="resolution" value="3.30 A"/>
    <property type="chains" value="g=1-55"/>
</dbReference>
<dbReference type="PDB" id="8PHJ">
    <property type="method" value="EM"/>
    <property type="resolution" value="3.67 A"/>
    <property type="chains" value="0=1-55"/>
</dbReference>
<dbReference type="PDB" id="8PKL">
    <property type="method" value="EM"/>
    <property type="resolution" value="3.09 A"/>
    <property type="chains" value="g=1-55"/>
</dbReference>
<dbReference type="PDB" id="8PVA">
    <property type="method" value="EM"/>
    <property type="resolution" value="4.50 A"/>
    <property type="chains" value="0=1-55"/>
</dbReference>
<dbReference type="PDB" id="8Q4F">
    <property type="method" value="EM"/>
    <property type="resolution" value="3.10 A"/>
    <property type="chains" value="0=1-55"/>
</dbReference>
<dbReference type="PDB" id="8QBT">
    <property type="method" value="EM"/>
    <property type="resolution" value="2.20 A"/>
    <property type="chains" value="b=1-55"/>
</dbReference>
<dbReference type="PDB" id="8QK7">
    <property type="method" value="EM"/>
    <property type="resolution" value="2.77 A"/>
    <property type="chains" value="c=1-55"/>
</dbReference>
<dbReference type="PDB" id="8QOA">
    <property type="method" value="EM"/>
    <property type="resolution" value="2.00 A"/>
    <property type="chains" value="0=1-55"/>
</dbReference>
<dbReference type="PDB" id="8R3V">
    <property type="method" value="EM"/>
    <property type="resolution" value="3.28 A"/>
    <property type="chains" value="g2=1-55"/>
</dbReference>
<dbReference type="PDB" id="8R6C">
    <property type="method" value="EM"/>
    <property type="resolution" value="2.20 A"/>
    <property type="chains" value="0=1-55"/>
</dbReference>
<dbReference type="PDB" id="8R8M">
    <property type="method" value="EM"/>
    <property type="resolution" value="2.40 A"/>
    <property type="chains" value="0=1-55"/>
</dbReference>
<dbReference type="PDB" id="8RCL">
    <property type="method" value="EM"/>
    <property type="resolution" value="3.49 A"/>
    <property type="chains" value="g2=1-55"/>
</dbReference>
<dbReference type="PDB" id="8RCM">
    <property type="method" value="EM"/>
    <property type="resolution" value="3.59 A"/>
    <property type="chains" value="g2=1-55"/>
</dbReference>
<dbReference type="PDB" id="8RCS">
    <property type="method" value="EM"/>
    <property type="resolution" value="4.46 A"/>
    <property type="chains" value="g2=1-55"/>
</dbReference>
<dbReference type="PDB" id="8RCT">
    <property type="method" value="EM"/>
    <property type="resolution" value="5.32 A"/>
    <property type="chains" value="g2=1-55"/>
</dbReference>
<dbReference type="PDB" id="8RPY">
    <property type="method" value="EM"/>
    <property type="resolution" value="2.64 A"/>
    <property type="chains" value="1=4-53"/>
</dbReference>
<dbReference type="PDB" id="8RPZ">
    <property type="method" value="EM"/>
    <property type="resolution" value="2.44 A"/>
    <property type="chains" value="1=4-53"/>
</dbReference>
<dbReference type="PDB" id="8RQ0">
    <property type="method" value="EM"/>
    <property type="resolution" value="2.44 A"/>
    <property type="chains" value="1=4-53"/>
</dbReference>
<dbReference type="PDB" id="8RQ2">
    <property type="method" value="EM"/>
    <property type="resolution" value="2.44 A"/>
    <property type="chains" value="1=4-53"/>
</dbReference>
<dbReference type="PDB" id="8SYL">
    <property type="method" value="EM"/>
    <property type="resolution" value="2.90 A"/>
    <property type="chains" value="5=1-55"/>
</dbReference>
<dbReference type="PDB" id="8T5D">
    <property type="method" value="EM"/>
    <property type="resolution" value="3.20 A"/>
    <property type="chains" value="1=4-54"/>
</dbReference>
<dbReference type="PDB" id="8T5H">
    <property type="method" value="EM"/>
    <property type="resolution" value="3.30 A"/>
    <property type="chains" value="1=4-54"/>
</dbReference>
<dbReference type="PDB" id="8VS9">
    <property type="method" value="EM"/>
    <property type="resolution" value="3.90 A"/>
    <property type="chains" value="L33=1-55"/>
</dbReference>
<dbReference type="PDB" id="8VSA">
    <property type="method" value="EM"/>
    <property type="resolution" value="3.70 A"/>
    <property type="chains" value="L33=1-55"/>
</dbReference>
<dbReference type="PDB" id="8W51">
    <property type="method" value="EM"/>
    <property type="resolution" value="2.40 A"/>
    <property type="chains" value="2=1-55"/>
</dbReference>
<dbReference type="PDB" id="8YUO">
    <property type="method" value="EM"/>
    <property type="resolution" value="2.25 A"/>
    <property type="chains" value="0=1-55"/>
</dbReference>
<dbReference type="PDB" id="8YUP">
    <property type="method" value="EM"/>
    <property type="resolution" value="2.39 A"/>
    <property type="chains" value="0=1-55"/>
</dbReference>
<dbReference type="PDB" id="8YUQ">
    <property type="method" value="EM"/>
    <property type="resolution" value="2.41 A"/>
    <property type="chains" value="0=1-55"/>
</dbReference>
<dbReference type="PDB" id="8YUR">
    <property type="method" value="EM"/>
    <property type="resolution" value="2.47 A"/>
    <property type="chains" value="0=1-55"/>
</dbReference>
<dbReference type="PDB" id="8YUS">
    <property type="method" value="EM"/>
    <property type="resolution" value="2.43 A"/>
    <property type="chains" value="0=1-55"/>
</dbReference>
<dbReference type="PDB" id="9D89">
    <property type="method" value="EM"/>
    <property type="resolution" value="1.95 A"/>
    <property type="chains" value="0=1-55"/>
</dbReference>
<dbReference type="PDB" id="9FBV">
    <property type="method" value="EM"/>
    <property type="resolution" value="2.40 A"/>
    <property type="chains" value="0=1-55"/>
</dbReference>
<dbReference type="PDB" id="9GFT">
    <property type="method" value="EM"/>
    <property type="resolution" value="3.10 A"/>
    <property type="chains" value="Aw/o=1-55"/>
</dbReference>
<dbReference type="PDB" id="9GGR">
    <property type="method" value="EM"/>
    <property type="resolution" value="3.20 A"/>
    <property type="chains" value="Aw/o=1-55"/>
</dbReference>
<dbReference type="PDB" id="9H3X">
    <property type="method" value="EM"/>
    <property type="resolution" value="4.12 A"/>
    <property type="chains" value="1=4-53"/>
</dbReference>
<dbReference type="PDB" id="9H3Z">
    <property type="method" value="EM"/>
    <property type="resolution" value="2.98 A"/>
    <property type="chains" value="1=4-53"/>
</dbReference>
<dbReference type="PDB" id="9HA6">
    <property type="method" value="EM"/>
    <property type="resolution" value="3.08 A"/>
    <property type="chains" value="1=4-53"/>
</dbReference>
<dbReference type="PDB" id="9MOR">
    <property type="method" value="EM"/>
    <property type="resolution" value="2.65 A"/>
    <property type="chains" value="c=1-55"/>
</dbReference>
<dbReference type="PDB" id="9MQ4">
    <property type="method" value="EM"/>
    <property type="resolution" value="2.78 A"/>
    <property type="chains" value="c=1-55"/>
</dbReference>
<dbReference type="PDBsum" id="2J28"/>
<dbReference type="PDBsum" id="2RDO"/>
<dbReference type="PDBsum" id="3BBX"/>
<dbReference type="PDBsum" id="3J5L"/>
<dbReference type="PDBsum" id="3J5S"/>
<dbReference type="PDBsum" id="3J7Z"/>
<dbReference type="PDBsum" id="3J9Y"/>
<dbReference type="PDBsum" id="3J9Z"/>
<dbReference type="PDBsum" id="3JA1"/>
<dbReference type="PDBsum" id="3JBU"/>
<dbReference type="PDBsum" id="3JBV"/>
<dbReference type="PDBsum" id="3JCD"/>
<dbReference type="PDBsum" id="3JCE"/>
<dbReference type="PDBsum" id="3JCJ"/>
<dbReference type="PDBsum" id="3JCN"/>
<dbReference type="PDBsum" id="4CSU"/>
<dbReference type="PDBsum" id="4U1U"/>
<dbReference type="PDBsum" id="4U1V"/>
<dbReference type="PDBsum" id="4U20"/>
<dbReference type="PDBsum" id="4U24"/>
<dbReference type="PDBsum" id="4U25"/>
<dbReference type="PDBsum" id="4U26"/>
<dbReference type="PDBsum" id="4U27"/>
<dbReference type="PDBsum" id="4UY8"/>
<dbReference type="PDBsum" id="4V47"/>
<dbReference type="PDBsum" id="4V48"/>
<dbReference type="PDBsum" id="4V4H"/>
<dbReference type="PDBsum" id="4V4Q"/>
<dbReference type="PDBsum" id="4V4V"/>
<dbReference type="PDBsum" id="4V4W"/>
<dbReference type="PDBsum" id="4V50"/>
<dbReference type="PDBsum" id="4V52"/>
<dbReference type="PDBsum" id="4V53"/>
<dbReference type="PDBsum" id="4V54"/>
<dbReference type="PDBsum" id="4V55"/>
<dbReference type="PDBsum" id="4V56"/>
<dbReference type="PDBsum" id="4V57"/>
<dbReference type="PDBsum" id="4V5B"/>
<dbReference type="PDBsum" id="4V5H"/>
<dbReference type="PDBsum" id="4V5Y"/>
<dbReference type="PDBsum" id="4V64"/>
<dbReference type="PDBsum" id="4V65"/>
<dbReference type="PDBsum" id="4V66"/>
<dbReference type="PDBsum" id="4V69"/>
<dbReference type="PDBsum" id="4V6C"/>
<dbReference type="PDBsum" id="4V6D"/>
<dbReference type="PDBsum" id="4V6E"/>
<dbReference type="PDBsum" id="4V6K"/>
<dbReference type="PDBsum" id="4V6L"/>
<dbReference type="PDBsum" id="4V6M"/>
<dbReference type="PDBsum" id="4V6N"/>
<dbReference type="PDBsum" id="4V6O"/>
<dbReference type="PDBsum" id="4V6P"/>
<dbReference type="PDBsum" id="4V6Q"/>
<dbReference type="PDBsum" id="4V6R"/>
<dbReference type="PDBsum" id="4V6S"/>
<dbReference type="PDBsum" id="4V6T"/>
<dbReference type="PDBsum" id="4V6V"/>
<dbReference type="PDBsum" id="4V6Y"/>
<dbReference type="PDBsum" id="4V6Z"/>
<dbReference type="PDBsum" id="4V70"/>
<dbReference type="PDBsum" id="4V71"/>
<dbReference type="PDBsum" id="4V72"/>
<dbReference type="PDBsum" id="4V73"/>
<dbReference type="PDBsum" id="4V74"/>
<dbReference type="PDBsum" id="4V75"/>
<dbReference type="PDBsum" id="4V76"/>
<dbReference type="PDBsum" id="4V77"/>
<dbReference type="PDBsum" id="4V78"/>
<dbReference type="PDBsum" id="4V79"/>
<dbReference type="PDBsum" id="4V7A"/>
<dbReference type="PDBsum" id="4V7B"/>
<dbReference type="PDBsum" id="4V7C"/>
<dbReference type="PDBsum" id="4V7D"/>
<dbReference type="PDBsum" id="4V7I"/>
<dbReference type="PDBsum" id="4V7S"/>
<dbReference type="PDBsum" id="4V7T"/>
<dbReference type="PDBsum" id="4V7U"/>
<dbReference type="PDBsum" id="4V7V"/>
<dbReference type="PDBsum" id="4V85"/>
<dbReference type="PDBsum" id="4V89"/>
<dbReference type="PDBsum" id="4V9C"/>
<dbReference type="PDBsum" id="4V9D"/>
<dbReference type="PDBsum" id="4V9O"/>
<dbReference type="PDBsum" id="4V9P"/>
<dbReference type="PDBsum" id="4WF1"/>
<dbReference type="PDBsum" id="4WOI"/>
<dbReference type="PDBsum" id="4WWW"/>
<dbReference type="PDBsum" id="4YBB"/>
<dbReference type="PDBsum" id="5ADY"/>
<dbReference type="PDBsum" id="5AFI"/>
<dbReference type="PDBsum" id="5AKA"/>
<dbReference type="PDBsum" id="5GAD"/>
<dbReference type="PDBsum" id="5GAE"/>
<dbReference type="PDBsum" id="5GAF"/>
<dbReference type="PDBsum" id="5GAG"/>
<dbReference type="PDBsum" id="5GAH"/>
<dbReference type="PDBsum" id="5H5U"/>
<dbReference type="PDBsum" id="5IQR"/>
<dbReference type="PDBsum" id="5IT8"/>
<dbReference type="PDBsum" id="5J5B"/>
<dbReference type="PDBsum" id="5J7L"/>
<dbReference type="PDBsum" id="5J88"/>
<dbReference type="PDBsum" id="5J8A"/>
<dbReference type="PDBsum" id="5J91"/>
<dbReference type="PDBsum" id="5JC9"/>
<dbReference type="PDBsum" id="5JTE"/>
<dbReference type="PDBsum" id="5JU8"/>
<dbReference type="PDBsum" id="5KCR"/>
<dbReference type="PDBsum" id="5KCS"/>
<dbReference type="PDBsum" id="5KPS"/>
<dbReference type="PDBsum" id="5KPV"/>
<dbReference type="PDBsum" id="5KPW"/>
<dbReference type="PDBsum" id="5KPX"/>
<dbReference type="PDBsum" id="5L3P"/>
<dbReference type="PDBsum" id="5LZA"/>
<dbReference type="PDBsum" id="5LZB"/>
<dbReference type="PDBsum" id="5LZC"/>
<dbReference type="PDBsum" id="5LZD"/>
<dbReference type="PDBsum" id="5LZE"/>
<dbReference type="PDBsum" id="5LZF"/>
<dbReference type="PDBsum" id="5MDV"/>
<dbReference type="PDBsum" id="5MDW"/>
<dbReference type="PDBsum" id="5MDY"/>
<dbReference type="PDBsum" id="5MDZ"/>
<dbReference type="PDBsum" id="5MGP"/>
<dbReference type="PDBsum" id="5NCO"/>
<dbReference type="PDBsum" id="5NP6"/>
<dbReference type="PDBsum" id="5NWY"/>
<dbReference type="PDBsum" id="5O2R"/>
<dbReference type="PDBsum" id="5U4I"/>
<dbReference type="PDBsum" id="5U9F"/>
<dbReference type="PDBsum" id="5U9G"/>
<dbReference type="PDBsum" id="5UYK"/>
<dbReference type="PDBsum" id="5UYL"/>
<dbReference type="PDBsum" id="5UYM"/>
<dbReference type="PDBsum" id="5UYN"/>
<dbReference type="PDBsum" id="5UYP"/>
<dbReference type="PDBsum" id="5UYQ"/>
<dbReference type="PDBsum" id="5WDT"/>
<dbReference type="PDBsum" id="5WE4"/>
<dbReference type="PDBsum" id="5WE6"/>
<dbReference type="PDBsum" id="5WF0"/>
<dbReference type="PDBsum" id="5WFK"/>
<dbReference type="PDBsum" id="5WFS"/>
<dbReference type="PDBsum" id="6BU8"/>
<dbReference type="PDBsum" id="6BY1"/>
<dbReference type="PDBsum" id="6C4I"/>
<dbReference type="PDBsum" id="6DNC"/>
<dbReference type="PDBsum" id="6ENF"/>
<dbReference type="PDBsum" id="6ENJ"/>
<dbReference type="PDBsum" id="6ENU"/>
<dbReference type="PDBsum" id="6GBZ"/>
<dbReference type="PDBsum" id="6GC0"/>
<dbReference type="PDBsum" id="6GC8"/>
<dbReference type="PDBsum" id="6GWT"/>
<dbReference type="PDBsum" id="6GXM"/>
<dbReference type="PDBsum" id="6GXN"/>
<dbReference type="PDBsum" id="6GXO"/>
<dbReference type="PDBsum" id="6GXP"/>
<dbReference type="PDBsum" id="6H4N"/>
<dbReference type="PDBsum" id="6H58"/>
<dbReference type="PDBsum" id="6HRM"/>
<dbReference type="PDBsum" id="6I0Y"/>
<dbReference type="PDBsum" id="6I7V"/>
<dbReference type="PDBsum" id="6O9J"/>
<dbReference type="PDBsum" id="6O9K"/>
<dbReference type="PDBsum" id="6OFX"/>
<dbReference type="PDBsum" id="6OG7"/>
<dbReference type="PDBsum" id="6OGF"/>
<dbReference type="PDBsum" id="6OGG"/>
<dbReference type="PDBsum" id="6OGI"/>
<dbReference type="PDBsum" id="6OM6"/>
<dbReference type="PDBsum" id="6ORE"/>
<dbReference type="PDBsum" id="6ORL"/>
<dbReference type="PDBsum" id="6OSK"/>
<dbReference type="PDBsum" id="6OSQ"/>
<dbReference type="PDBsum" id="6OST"/>
<dbReference type="PDBsum" id="6OT3"/>
<dbReference type="PDBsum" id="6OUO"/>
<dbReference type="PDBsum" id="6PJ6"/>
<dbReference type="PDBsum" id="6Q97"/>
<dbReference type="PDBsum" id="6Q98"/>
<dbReference type="PDBsum" id="6Q9A"/>
<dbReference type="PDBsum" id="6QDW"/>
<dbReference type="PDBsum" id="6QUL"/>
<dbReference type="PDBsum" id="6S0K"/>
<dbReference type="PDBsum" id="6SZS"/>
<dbReference type="PDBsum" id="6TBV"/>
<dbReference type="PDBsum" id="6TC3"/>
<dbReference type="PDBsum" id="6U48"/>
<dbReference type="PDBsum" id="6VU3"/>
<dbReference type="PDBsum" id="6VWL"/>
<dbReference type="PDBsum" id="6VWM"/>
<dbReference type="PDBsum" id="6VWN"/>
<dbReference type="PDBsum" id="6VYQ"/>
<dbReference type="PDBsum" id="6VYR"/>
<dbReference type="PDBsum" id="6VYS"/>
<dbReference type="PDBsum" id="6VYT"/>
<dbReference type="PDBsum" id="6VYU"/>
<dbReference type="PDBsum" id="6VYW"/>
<dbReference type="PDBsum" id="6VYX"/>
<dbReference type="PDBsum" id="6VYY"/>
<dbReference type="PDBsum" id="6VYZ"/>
<dbReference type="PDBsum" id="6VZ2"/>
<dbReference type="PDBsum" id="6VZ3"/>
<dbReference type="PDBsum" id="6VZ5"/>
<dbReference type="PDBsum" id="6VZ7"/>
<dbReference type="PDBsum" id="6VZJ"/>
<dbReference type="PDBsum" id="6WD0"/>
<dbReference type="PDBsum" id="6WD1"/>
<dbReference type="PDBsum" id="6WD2"/>
<dbReference type="PDBsum" id="6WD3"/>
<dbReference type="PDBsum" id="6WD4"/>
<dbReference type="PDBsum" id="6WD5"/>
<dbReference type="PDBsum" id="6WD6"/>
<dbReference type="PDBsum" id="6WD7"/>
<dbReference type="PDBsum" id="6WD8"/>
<dbReference type="PDBsum" id="6WD9"/>
<dbReference type="PDBsum" id="6WDA"/>
<dbReference type="PDBsum" id="6WDB"/>
<dbReference type="PDBsum" id="6WDC"/>
<dbReference type="PDBsum" id="6WDD"/>
<dbReference type="PDBsum" id="6WDE"/>
<dbReference type="PDBsum" id="6WDF"/>
<dbReference type="PDBsum" id="6WDG"/>
<dbReference type="PDBsum" id="6WDH"/>
<dbReference type="PDBsum" id="6WDI"/>
<dbReference type="PDBsum" id="6WDJ"/>
<dbReference type="PDBsum" id="6WDK"/>
<dbReference type="PDBsum" id="6WDL"/>
<dbReference type="PDBsum" id="6WDM"/>
<dbReference type="PDBsum" id="6WNW"/>
<dbReference type="PDBsum" id="6X6T"/>
<dbReference type="PDBsum" id="6X7F"/>
<dbReference type="PDBsum" id="6X7K"/>
<dbReference type="PDBsum" id="6X9Q"/>
<dbReference type="PDBsum" id="6XDQ"/>
<dbReference type="PDBsum" id="6XDR"/>
<dbReference type="PDBsum" id="6XGF"/>
<dbReference type="PDBsum" id="6XII"/>
<dbReference type="PDBsum" id="6XIJ"/>
<dbReference type="PDBsum" id="6XZ7"/>
<dbReference type="PDBsum" id="6XZA"/>
<dbReference type="PDBsum" id="6XZB"/>
<dbReference type="PDBsum" id="6Y69"/>
<dbReference type="PDBsum" id="6YS3"/>
<dbReference type="PDBsum" id="6YSR"/>
<dbReference type="PDBsum" id="6YSS"/>
<dbReference type="PDBsum" id="6YST"/>
<dbReference type="PDBsum" id="6YSU"/>
<dbReference type="PDBsum" id="6ZTJ"/>
<dbReference type="PDBsum" id="6ZTL"/>
<dbReference type="PDBsum" id="6ZTM"/>
<dbReference type="PDBsum" id="6ZTN"/>
<dbReference type="PDBsum" id="6ZTO"/>
<dbReference type="PDBsum" id="6ZTP"/>
<dbReference type="PDBsum" id="6ZU1"/>
<dbReference type="PDBsum" id="7ABZ"/>
<dbReference type="PDBsum" id="7AC7"/>
<dbReference type="PDBsum" id="7ACJ"/>
<dbReference type="PDBsum" id="7ACR"/>
<dbReference type="PDBsum" id="7B5K"/>
<dbReference type="PDBsum" id="7BL2"/>
<dbReference type="PDBsum" id="7BL3"/>
<dbReference type="PDBsum" id="7BL4"/>
<dbReference type="PDBsum" id="7BL5"/>
<dbReference type="PDBsum" id="7BL6"/>
<dbReference type="PDBsum" id="7BV8"/>
<dbReference type="PDBsum" id="7D6Z"/>
<dbReference type="PDBsum" id="7D80"/>
<dbReference type="PDBsum" id="7JSS"/>
<dbReference type="PDBsum" id="7JSW"/>
<dbReference type="PDBsum" id="7JSZ"/>
<dbReference type="PDBsum" id="7JT1"/>
<dbReference type="PDBsum" id="7JT2"/>
<dbReference type="PDBsum" id="7JT3"/>
<dbReference type="PDBsum" id="7K00"/>
<dbReference type="PDBsum" id="7K50"/>
<dbReference type="PDBsum" id="7K51"/>
<dbReference type="PDBsum" id="7K52"/>
<dbReference type="PDBsum" id="7K53"/>
<dbReference type="PDBsum" id="7K54"/>
<dbReference type="PDBsum" id="7K55"/>
<dbReference type="PDBsum" id="7LV0"/>
<dbReference type="PDBsum" id="7LVK"/>
<dbReference type="PDBsum" id="7M5D"/>
<dbReference type="PDBsum" id="7N1P"/>
<dbReference type="PDBsum" id="7N2C"/>
<dbReference type="PDBsum" id="7N2U"/>
<dbReference type="PDBsum" id="7N2V"/>
<dbReference type="PDBsum" id="7N30"/>
<dbReference type="PDBsum" id="7N31"/>
<dbReference type="PDBsum" id="7NBU"/>
<dbReference type="PDBsum" id="7NWT"/>
<dbReference type="PDBsum" id="7O19"/>
<dbReference type="PDBsum" id="7O1A"/>
<dbReference type="PDBsum" id="7O1C"/>
<dbReference type="PDBsum" id="7OIZ"/>
<dbReference type="PDBsum" id="7OJ0"/>
<dbReference type="PDBsum" id="7P3K"/>
<dbReference type="PDBsum" id="7PJS"/>
<dbReference type="PDBsum" id="7PJT"/>
<dbReference type="PDBsum" id="7PJU"/>
<dbReference type="PDBsum" id="7PJV"/>
<dbReference type="PDBsum" id="7PJW"/>
<dbReference type="PDBsum" id="7PJX"/>
<dbReference type="PDBsum" id="7PJY"/>
<dbReference type="PDBsum" id="7PJZ"/>
<dbReference type="PDBsum" id="7Q4K"/>
<dbReference type="PDBsum" id="7QG8"/>
<dbReference type="PDBsum" id="7QGH"/>
<dbReference type="PDBsum" id="7QGN"/>
<dbReference type="PDBsum" id="7QGR"/>
<dbReference type="PDBsum" id="7QQ3"/>
<dbReference type="PDBsum" id="7S1G"/>
<dbReference type="PDBsum" id="7S1H"/>
<dbReference type="PDBsum" id="7S1I"/>
<dbReference type="PDBsum" id="7S1J"/>
<dbReference type="PDBsum" id="7S1K"/>
<dbReference type="PDBsum" id="7SA4"/>
<dbReference type="PDBsum" id="7SS9"/>
<dbReference type="PDBsum" id="7SSD"/>
<dbReference type="PDBsum" id="7SSL"/>
<dbReference type="PDBsum" id="7SSN"/>
<dbReference type="PDBsum" id="7SSO"/>
<dbReference type="PDBsum" id="7SSW"/>
<dbReference type="PDBsum" id="7ST2"/>
<dbReference type="PDBsum" id="7ST6"/>
<dbReference type="PDBsum" id="7ST7"/>
<dbReference type="PDBsum" id="7TOS"/>
<dbReference type="PDBsum" id="7UG7"/>
<dbReference type="PDBsum" id="7UPH"/>
<dbReference type="PDBsum" id="7Y7C"/>
<dbReference type="PDBsum" id="7Y7D"/>
<dbReference type="PDBsum" id="7Y7E"/>
<dbReference type="PDBsum" id="7Y7F"/>
<dbReference type="PDBsum" id="7Y7G"/>
<dbReference type="PDBsum" id="7Y7H"/>
<dbReference type="PDBsum" id="7YLA"/>
<dbReference type="PDBsum" id="7Z20"/>
<dbReference type="PDBsum" id="7ZOD"/>
<dbReference type="PDBsum" id="7ZP8"/>
<dbReference type="PDBsum" id="7ZQ5"/>
<dbReference type="PDBsum" id="7ZQ6"/>
<dbReference type="PDBsum" id="7ZTA"/>
<dbReference type="PDBsum" id="8A3L"/>
<dbReference type="PDBsum" id="8AKN"/>
<dbReference type="PDBsum" id="8AM9"/>
<dbReference type="PDBsum" id="8ANA"/>
<dbReference type="PDBsum" id="8AP4"/>
<dbReference type="PDBsum" id="8AYE"/>
<dbReference type="PDBsum" id="8B0X"/>
<dbReference type="PDBsum" id="8B7Y"/>
<dbReference type="PDBsum" id="8BF7"/>
<dbReference type="PDBsum" id="8BGE"/>
<dbReference type="PDBsum" id="8BGH"/>
<dbReference type="PDBsum" id="8BH4"/>
<dbReference type="PDBsum" id="8BHJ"/>
<dbReference type="PDBsum" id="8BHL"/>
<dbReference type="PDBsum" id="8BHN"/>
<dbReference type="PDBsum" id="8BHP"/>
<dbReference type="PDBsum" id="8BIL"/>
<dbReference type="PDBsum" id="8BIM"/>
<dbReference type="PDBsum" id="8C8X"/>
<dbReference type="PDBsum" id="8CAM"/>
<dbReference type="PDBsum" id="8CEU"/>
<dbReference type="PDBsum" id="8CGD"/>
<dbReference type="PDBsum" id="8CGK"/>
<dbReference type="PDBsum" id="8CGV"/>
<dbReference type="PDBsum" id="8EIU"/>
<dbReference type="PDBsum" id="8EKC"/>
<dbReference type="PDBsum" id="8EMM"/>
<dbReference type="PDBsum" id="8FIZ"/>
<dbReference type="PDBsum" id="8FTO"/>
<dbReference type="PDBsum" id="8FZD"/>
<dbReference type="PDBsum" id="8FZE"/>
<dbReference type="PDBsum" id="8FZF"/>
<dbReference type="PDBsum" id="8FZG"/>
<dbReference type="PDBsum" id="8FZH"/>
<dbReference type="PDBsum" id="8FZI"/>
<dbReference type="PDBsum" id="8FZJ"/>
<dbReference type="PDBsum" id="8G2U"/>
<dbReference type="PDBsum" id="8G31"/>
<dbReference type="PDBsum" id="8G34"/>
<dbReference type="PDBsum" id="8G38"/>
<dbReference type="PDBsum" id="8G6W"/>
<dbReference type="PDBsum" id="8G6X"/>
<dbReference type="PDBsum" id="8G6Y"/>
<dbReference type="PDBsum" id="8G7P"/>
<dbReference type="PDBsum" id="8G7Q"/>
<dbReference type="PDBsum" id="8G7R"/>
<dbReference type="PDBsum" id="8G7S"/>
<dbReference type="PDBsum" id="8HSP"/>
<dbReference type="PDBsum" id="8HTZ"/>
<dbReference type="PDBsum" id="8HU1"/>
<dbReference type="PDBsum" id="8IFB"/>
<dbReference type="PDBsum" id="8IFC"/>
<dbReference type="PDBsum" id="8J1Z"/>
<dbReference type="PDBsum" id="8P16"/>
<dbReference type="PDBsum" id="8P17"/>
<dbReference type="PDBsum" id="8P18"/>
<dbReference type="PDBsum" id="8PEG"/>
<dbReference type="PDBsum" id="8PHJ"/>
<dbReference type="PDBsum" id="8PKL"/>
<dbReference type="PDBsum" id="8PVA"/>
<dbReference type="PDBsum" id="8Q4F"/>
<dbReference type="PDBsum" id="8QBT"/>
<dbReference type="PDBsum" id="8QK7"/>
<dbReference type="PDBsum" id="8QOA"/>
<dbReference type="PDBsum" id="8R3V"/>
<dbReference type="PDBsum" id="8R6C"/>
<dbReference type="PDBsum" id="8R8M"/>
<dbReference type="PDBsum" id="8RCL"/>
<dbReference type="PDBsum" id="8RCM"/>
<dbReference type="PDBsum" id="8RCS"/>
<dbReference type="PDBsum" id="8RCT"/>
<dbReference type="PDBsum" id="8RPY"/>
<dbReference type="PDBsum" id="8RPZ"/>
<dbReference type="PDBsum" id="8RQ0"/>
<dbReference type="PDBsum" id="8RQ2"/>
<dbReference type="PDBsum" id="8SYL"/>
<dbReference type="PDBsum" id="8T5D"/>
<dbReference type="PDBsum" id="8T5H"/>
<dbReference type="PDBsum" id="8VS9"/>
<dbReference type="PDBsum" id="8VSA"/>
<dbReference type="PDBsum" id="8W51"/>
<dbReference type="PDBsum" id="8YUO"/>
<dbReference type="PDBsum" id="8YUP"/>
<dbReference type="PDBsum" id="8YUQ"/>
<dbReference type="PDBsum" id="8YUR"/>
<dbReference type="PDBsum" id="8YUS"/>
<dbReference type="PDBsum" id="9D89"/>
<dbReference type="PDBsum" id="9FBV"/>
<dbReference type="PDBsum" id="9GFT"/>
<dbReference type="PDBsum" id="9GGR"/>
<dbReference type="PDBsum" id="9H3X"/>
<dbReference type="PDBsum" id="9H3Z"/>
<dbReference type="PDBsum" id="9HA6"/>
<dbReference type="PDBsum" id="9MOR"/>
<dbReference type="PDBsum" id="9MQ4"/>
<dbReference type="EMDB" id="EMD-0076"/>
<dbReference type="EMDB" id="EMD-0080"/>
<dbReference type="EMDB" id="EMD-0081"/>
<dbReference type="EMDB" id="EMD-0082"/>
<dbReference type="EMDB" id="EMD-0083"/>
<dbReference type="EMDB" id="EMD-0137"/>
<dbReference type="EMDB" id="EMD-0139"/>
<dbReference type="EMDB" id="EMD-0261"/>
<dbReference type="EMDB" id="EMD-0322"/>
<dbReference type="EMDB" id="EMD-10073"/>
<dbReference type="EMDB" id="EMD-10353"/>
<dbReference type="EMDB" id="EMD-10453"/>
<dbReference type="EMDB" id="EMD-10458"/>
<dbReference type="EMDB" id="EMD-10655"/>
<dbReference type="EMDB" id="EMD-10656"/>
<dbReference type="EMDB" id="EMD-10657"/>
<dbReference type="EMDB" id="EMD-10705"/>
<dbReference type="EMDB" id="EMD-10905"/>
<dbReference type="EMDB" id="EMD-10906"/>
<dbReference type="EMDB" id="EMD-10907"/>
<dbReference type="EMDB" id="EMD-10908"/>
<dbReference type="EMDB" id="EMD-11418"/>
<dbReference type="EMDB" id="EMD-11419"/>
<dbReference type="EMDB" id="EMD-11420"/>
<dbReference type="EMDB" id="EMD-11421"/>
<dbReference type="EMDB" id="EMD-11422"/>
<dbReference type="EMDB" id="EMD-11423"/>
<dbReference type="EMDB" id="EMD-11426"/>
<dbReference type="EMDB" id="EMD-11710"/>
<dbReference type="EMDB" id="EMD-11713"/>
<dbReference type="EMDB" id="EMD-11717"/>
<dbReference type="EMDB" id="EMD-11718"/>
<dbReference type="EMDB" id="EMD-12035"/>
<dbReference type="EMDB" id="EMD-12215"/>
<dbReference type="EMDB" id="EMD-12216"/>
<dbReference type="EMDB" id="EMD-12217"/>
<dbReference type="EMDB" id="EMD-12218"/>
<dbReference type="EMDB" id="EMD-12219"/>
<dbReference type="EMDB" id="EMD-12261"/>
<dbReference type="EMDB" id="EMD-12635"/>
<dbReference type="EMDB" id="EMD-12693"/>
<dbReference type="EMDB" id="EMD-12694"/>
<dbReference type="EMDB" id="EMD-12695"/>
<dbReference type="EMDB" id="EMD-12936"/>
<dbReference type="EMDB" id="EMD-12937"/>
<dbReference type="EMDB" id="EMD-13180"/>
<dbReference type="EMDB" id="EMD-13458"/>
<dbReference type="EMDB" id="EMD-13459"/>
<dbReference type="EMDB" id="EMD-13460"/>
<dbReference type="EMDB" id="EMD-13461"/>
<dbReference type="EMDB" id="EMD-13462"/>
<dbReference type="EMDB" id="EMD-13463"/>
<dbReference type="EMDB" id="EMD-13464"/>
<dbReference type="EMDB" id="EMD-13465"/>
<dbReference type="EMDB" id="EMD-13805"/>
<dbReference type="EMDB" id="EMD-13952"/>
<dbReference type="EMDB" id="EMD-13955"/>
<dbReference type="EMDB" id="EMD-13956"/>
<dbReference type="EMDB" id="EMD-13958"/>
<dbReference type="EMDB" id="EMD-14121"/>
<dbReference type="EMDB" id="EMD-14454"/>
<dbReference type="EMDB" id="EMD-14846"/>
<dbReference type="EMDB" id="EMD-14850"/>
<dbReference type="EMDB" id="EMD-14864"/>
<dbReference type="EMDB" id="EMD-14865"/>
<dbReference type="EMDB" id="EMD-14956"/>
<dbReference type="EMDB" id="EMD-15116"/>
<dbReference type="EMDB" id="EMD-15558"/>
<dbReference type="EMDB" id="EMD-15712"/>
<dbReference type="EMDB" id="EMD-15793"/>
<dbReference type="EMDB" id="EMD-15905"/>
<dbReference type="EMDB" id="EMD-16015"/>
<dbReference type="EMDB" id="EMD-16029"/>
<dbReference type="EMDB" id="EMD-16031"/>
<dbReference type="EMDB" id="EMD-16047"/>
<dbReference type="EMDB" id="EMD-16057"/>
<dbReference type="EMDB" id="EMD-16059"/>
<dbReference type="EMDB" id="EMD-16062"/>
<dbReference type="EMDB" id="EMD-16065"/>
<dbReference type="EMDB" id="EMD-16081"/>
<dbReference type="EMDB" id="EMD-16082"/>
<dbReference type="EMDB" id="EMD-16494"/>
<dbReference type="EMDB" id="EMD-16530"/>
<dbReference type="EMDB" id="EMD-16613"/>
<dbReference type="EMDB" id="EMD-16641"/>
<dbReference type="EMDB" id="EMD-16646"/>
<dbReference type="EMDB" id="EMD-16652"/>
<dbReference type="EMDB" id="EMD-17346"/>
<dbReference type="EMDB" id="EMD-17347"/>
<dbReference type="EMDB" id="EMD-17348"/>
<dbReference type="EMDB" id="EMD-17631"/>
<dbReference type="EMDB" id="EMD-17667"/>
<dbReference type="EMDB" id="EMD-17743"/>
<dbReference type="EMDB" id="EMD-17959"/>
<dbReference type="EMDB" id="EMD-18145"/>
<dbReference type="EMDB" id="EMD-18320"/>
<dbReference type="EMDB" id="EMD-18458"/>
<dbReference type="EMDB" id="EMD-18534"/>
<dbReference type="EMDB" id="EMD-18875"/>
<dbReference type="EMDB" id="EMD-18950"/>
<dbReference type="EMDB" id="EMD-19004"/>
<dbReference type="EMDB" id="EMD-19054"/>
<dbReference type="EMDB" id="EMD-19055"/>
<dbReference type="EMDB" id="EMD-19058"/>
<dbReference type="EMDB" id="EMD-19059"/>
<dbReference type="EMDB" id="EMD-19426"/>
<dbReference type="EMDB" id="EMD-19427"/>
<dbReference type="EMDB" id="EMD-19428"/>
<dbReference type="EMDB" id="EMD-19429"/>
<dbReference type="EMDB" id="EMD-20048"/>
<dbReference type="EMDB" id="EMD-20052"/>
<dbReference type="EMDB" id="EMD-21420"/>
<dbReference type="EMDB" id="EMD-21421"/>
<dbReference type="EMDB" id="EMD-21422"/>
<dbReference type="EMDB" id="EMD-21620"/>
<dbReference type="EMDB" id="EMD-21625"/>
<dbReference type="EMDB" id="EMD-21630"/>
<dbReference type="EMDB" id="EMD-21631"/>
<dbReference type="EMDB" id="EMD-21632"/>
<dbReference type="EMDB" id="EMD-21633"/>
<dbReference type="EMDB" id="EMD-21634"/>
<dbReference type="EMDB" id="EMD-21635"/>
<dbReference type="EMDB" id="EMD-21636"/>
<dbReference type="EMDB" id="EMD-21637"/>
<dbReference type="EMDB" id="EMD-21638"/>
<dbReference type="EMDB" id="EMD-21639"/>
<dbReference type="EMDB" id="EMD-21640"/>
<dbReference type="EMDB" id="EMD-21641"/>
<dbReference type="EMDB" id="EMD-21858"/>
<dbReference type="EMDB" id="EMD-22459"/>
<dbReference type="EMDB" id="EMD-22461"/>
<dbReference type="EMDB" id="EMD-22464"/>
<dbReference type="EMDB" id="EMD-22466"/>
<dbReference type="EMDB" id="EMD-22469"/>
<dbReference type="EMDB" id="EMD-22472"/>
<dbReference type="EMDB" id="EMD-22669"/>
<dbReference type="EMDB" id="EMD-22670"/>
<dbReference type="EMDB" id="EMD-22671"/>
<dbReference type="EMDB" id="EMD-22672"/>
<dbReference type="EMDB" id="EMD-22673"/>
<dbReference type="EMDB" id="EMD-22674"/>
<dbReference type="EMDB" id="EMD-23528"/>
<dbReference type="EMDB" id="EMD-24120"/>
<dbReference type="EMDB" id="EMD-24132"/>
<dbReference type="EMDB" id="EMD-24133"/>
<dbReference type="EMDB" id="EMD-24134"/>
<dbReference type="EMDB" id="EMD-24135"/>
<dbReference type="EMDB" id="EMD-24136"/>
<dbReference type="EMDB" id="EMD-24803"/>
<dbReference type="EMDB" id="EMD-25405"/>
<dbReference type="EMDB" id="EMD-25407"/>
<dbReference type="EMDB" id="EMD-25409"/>
<dbReference type="EMDB" id="EMD-25410"/>
<dbReference type="EMDB" id="EMD-25411"/>
<dbReference type="EMDB" id="EMD-25415"/>
<dbReference type="EMDB" id="EMD-25418"/>
<dbReference type="EMDB" id="EMD-25420"/>
<dbReference type="EMDB" id="EMD-25421"/>
<dbReference type="EMDB" id="EMD-30215"/>
<dbReference type="EMDB" id="EMD-30598"/>
<dbReference type="EMDB" id="EMD-30611"/>
<dbReference type="EMDB" id="EMD-33660"/>
<dbReference type="EMDB" id="EMD-33661"/>
<dbReference type="EMDB" id="EMD-33662"/>
<dbReference type="EMDB" id="EMD-33663"/>
<dbReference type="EMDB" id="EMD-33664"/>
<dbReference type="EMDB" id="EMD-33665"/>
<dbReference type="EMDB" id="EMD-33904"/>
<dbReference type="EMDB" id="EMD-3489"/>
<dbReference type="EMDB" id="EMD-3490"/>
<dbReference type="EMDB" id="EMD-3492"/>
<dbReference type="EMDB" id="EMD-3493"/>
<dbReference type="EMDB" id="EMD-35001"/>
<dbReference type="EMDB" id="EMD-35020"/>
<dbReference type="EMDB" id="EMD-35022"/>
<dbReference type="EMDB" id="EMD-3508"/>
<dbReference type="EMDB" id="EMD-35411"/>
<dbReference type="EMDB" id="EMD-35412"/>
<dbReference type="EMDB" id="EMD-35939"/>
<dbReference type="EMDB" id="EMD-3617"/>
<dbReference type="EMDB" id="EMD-3713"/>
<dbReference type="EMDB" id="EMD-37271"/>
<dbReference type="EMDB" id="EMD-3730"/>
<dbReference type="EMDB" id="EMD-3898"/>
<dbReference type="EMDB" id="EMD-3899"/>
<dbReference type="EMDB" id="EMD-3903"/>
<dbReference type="EMDB" id="EMD-39577"/>
<dbReference type="EMDB" id="EMD-39578"/>
<dbReference type="EMDB" id="EMD-39579"/>
<dbReference type="EMDB" id="EMD-39580"/>
<dbReference type="EMDB" id="EMD-39581"/>
<dbReference type="EMDB" id="EMD-4001"/>
<dbReference type="EMDB" id="EMD-4121"/>
<dbReference type="EMDB" id="EMD-4122"/>
<dbReference type="EMDB" id="EMD-4123"/>
<dbReference type="EMDB" id="EMD-4124"/>
<dbReference type="EMDB" id="EMD-4125"/>
<dbReference type="EMDB" id="EMD-4126"/>
<dbReference type="EMDB" id="EMD-4378"/>
<dbReference type="EMDB" id="EMD-4379"/>
<dbReference type="EMDB" id="EMD-4383"/>
<dbReference type="EMDB" id="EMD-4476"/>
<dbReference type="EMDB" id="EMD-4477"/>
<dbReference type="EMDB" id="EMD-4478"/>
<dbReference type="EMDB" id="EMD-4638"/>
<dbReference type="EMDB" id="EMD-50296"/>
<dbReference type="EMDB" id="EMD-51318"/>
<dbReference type="EMDB" id="EMD-51340"/>
<dbReference type="EMDB" id="EMD-51841"/>
<dbReference type="EMDB" id="EMD-51843"/>
<dbReference type="EMDB" id="EMD-51978"/>
<dbReference type="EMDB" id="EMD-6667"/>
<dbReference type="EMDB" id="EMD-7289"/>
<dbReference type="EMDB" id="EMD-7341"/>
<dbReference type="EMDB" id="EMD-8000"/>
<dbReference type="EMDB" id="EMD-8001"/>
<dbReference type="EMDB" id="EMD-8002"/>
<dbReference type="EMDB" id="EMD-8003"/>
<dbReference type="EMDB" id="EMD-8004"/>
<dbReference type="EMDB" id="EMD-8107"/>
<dbReference type="EMDB" id="EMD-8175"/>
<dbReference type="EMDB" id="EMD-8176"/>
<dbReference type="EMDB" id="EMD-8237"/>
<dbReference type="EMDB" id="EMD-8238"/>
<dbReference type="EMDB" id="EMD-8279"/>
<dbReference type="EMDB" id="EMD-8280"/>
<dbReference type="EMDB" id="EMD-8281"/>
<dbReference type="EMDB" id="EMD-8282"/>
<dbReference type="EMDB" id="EMD-8505"/>
<dbReference type="EMDB" id="EMD-8615"/>
<dbReference type="EMDB" id="EMD-8616"/>
<dbReference type="EMDB" id="EMD-8617"/>
<dbReference type="EMDB" id="EMD-8618"/>
<dbReference type="EMDB" id="EMD-8619"/>
<dbReference type="EMDB" id="EMD-8620"/>
<dbReference type="EMDB" id="EMD-8813"/>
<dbReference type="EMDB" id="EMD-8814"/>
<dbReference type="EMDB" id="EMD-8815"/>
<dbReference type="EMDB" id="EMD-8828"/>
<dbReference type="SMR" id="P0A7N9"/>
<dbReference type="BioGRID" id="4260822">
    <property type="interactions" value="254"/>
</dbReference>
<dbReference type="BioGRID" id="850675">
    <property type="interactions" value="1"/>
</dbReference>
<dbReference type="ComplexPortal" id="CPX-3807">
    <property type="entry name" value="50S large ribosomal subunit"/>
</dbReference>
<dbReference type="DIP" id="DIP-35968N"/>
<dbReference type="FunCoup" id="P0A7N9">
    <property type="interactions" value="814"/>
</dbReference>
<dbReference type="IntAct" id="P0A7N9">
    <property type="interactions" value="67"/>
</dbReference>
<dbReference type="STRING" id="511145.b3636"/>
<dbReference type="iPTMnet" id="P0A7N9"/>
<dbReference type="jPOST" id="P0A7N9"/>
<dbReference type="PaxDb" id="511145-b3636"/>
<dbReference type="EnsemblBacteria" id="AAC76660">
    <property type="protein sequence ID" value="AAC76660"/>
    <property type="gene ID" value="b3636"/>
</dbReference>
<dbReference type="GeneID" id="946318"/>
<dbReference type="GeneID" id="97607673"/>
<dbReference type="KEGG" id="ecj:JW3611"/>
<dbReference type="KEGG" id="eco:b3636"/>
<dbReference type="KEGG" id="ecoc:C3026_19705"/>
<dbReference type="PATRIC" id="fig|1411691.4.peg.3070"/>
<dbReference type="EchoBASE" id="EB0884"/>
<dbReference type="eggNOG" id="COG0267">
    <property type="taxonomic scope" value="Bacteria"/>
</dbReference>
<dbReference type="HOGENOM" id="CLU_190949_1_1_6"/>
<dbReference type="InParanoid" id="P0A7N9"/>
<dbReference type="OMA" id="RMTLRKY"/>
<dbReference type="OrthoDB" id="21586at2"/>
<dbReference type="PhylomeDB" id="P0A7N9"/>
<dbReference type="BioCyc" id="EcoCyc:EG10891-MONOMER"/>
<dbReference type="BioCyc" id="MetaCyc:EG10891-MONOMER"/>
<dbReference type="EvolutionaryTrace" id="P0A7N9"/>
<dbReference type="PRO" id="PR:P0A7N9"/>
<dbReference type="Proteomes" id="UP000000625">
    <property type="component" value="Chromosome"/>
</dbReference>
<dbReference type="GO" id="GO:0005737">
    <property type="term" value="C:cytoplasm"/>
    <property type="evidence" value="ECO:0000314"/>
    <property type="project" value="ComplexPortal"/>
</dbReference>
<dbReference type="GO" id="GO:0005829">
    <property type="term" value="C:cytosol"/>
    <property type="evidence" value="ECO:0000314"/>
    <property type="project" value="EcoCyc"/>
</dbReference>
<dbReference type="GO" id="GO:0022625">
    <property type="term" value="C:cytosolic large ribosomal subunit"/>
    <property type="evidence" value="ECO:0000314"/>
    <property type="project" value="CAFA"/>
</dbReference>
<dbReference type="GO" id="GO:0003735">
    <property type="term" value="F:structural constituent of ribosome"/>
    <property type="evidence" value="ECO:0000314"/>
    <property type="project" value="CAFA"/>
</dbReference>
<dbReference type="GO" id="GO:0000049">
    <property type="term" value="F:tRNA binding"/>
    <property type="evidence" value="ECO:0007669"/>
    <property type="project" value="UniProtKB-KW"/>
</dbReference>
<dbReference type="GO" id="GO:0002181">
    <property type="term" value="P:cytoplasmic translation"/>
    <property type="evidence" value="ECO:0000303"/>
    <property type="project" value="ComplexPortal"/>
</dbReference>
<dbReference type="GO" id="GO:0046677">
    <property type="term" value="P:response to antibiotic"/>
    <property type="evidence" value="ECO:0000315"/>
    <property type="project" value="EcoCyc"/>
</dbReference>
<dbReference type="GO" id="GO:0000027">
    <property type="term" value="P:ribosomal large subunit assembly"/>
    <property type="evidence" value="ECO:0000314"/>
    <property type="project" value="CAFA"/>
</dbReference>
<dbReference type="FunFam" id="2.20.28.120:FF:000001">
    <property type="entry name" value="50S ribosomal protein L33"/>
    <property type="match status" value="1"/>
</dbReference>
<dbReference type="Gene3D" id="2.20.28.120">
    <property type="entry name" value="Ribosomal protein L33"/>
    <property type="match status" value="1"/>
</dbReference>
<dbReference type="HAMAP" id="MF_00294">
    <property type="entry name" value="Ribosomal_bL33"/>
    <property type="match status" value="1"/>
</dbReference>
<dbReference type="InterPro" id="IPR001705">
    <property type="entry name" value="Ribosomal_bL33"/>
</dbReference>
<dbReference type="InterPro" id="IPR018264">
    <property type="entry name" value="Ribosomal_bL33_CS"/>
</dbReference>
<dbReference type="InterPro" id="IPR038584">
    <property type="entry name" value="Ribosomal_bL33_sf"/>
</dbReference>
<dbReference type="InterPro" id="IPR011332">
    <property type="entry name" value="Ribosomal_zn-bd"/>
</dbReference>
<dbReference type="NCBIfam" id="NF001860">
    <property type="entry name" value="PRK00595.1"/>
    <property type="match status" value="1"/>
</dbReference>
<dbReference type="NCBIfam" id="TIGR01023">
    <property type="entry name" value="rpmG_bact"/>
    <property type="match status" value="1"/>
</dbReference>
<dbReference type="PANTHER" id="PTHR15238">
    <property type="entry name" value="54S RIBOSOMAL PROTEIN L39, MITOCHONDRIAL"/>
    <property type="match status" value="1"/>
</dbReference>
<dbReference type="PANTHER" id="PTHR15238:SF1">
    <property type="entry name" value="LARGE RIBOSOMAL SUBUNIT PROTEIN BL33M"/>
    <property type="match status" value="1"/>
</dbReference>
<dbReference type="Pfam" id="PF00471">
    <property type="entry name" value="Ribosomal_L33"/>
    <property type="match status" value="1"/>
</dbReference>
<dbReference type="SUPFAM" id="SSF57829">
    <property type="entry name" value="Zn-binding ribosomal proteins"/>
    <property type="match status" value="1"/>
</dbReference>
<dbReference type="PROSITE" id="PS00582">
    <property type="entry name" value="RIBOSOMAL_L33"/>
    <property type="match status" value="1"/>
</dbReference>